<evidence type="ECO:0000250" key="1"/>
<evidence type="ECO:0000255" key="2"/>
<evidence type="ECO:0000255" key="3">
    <source>
        <dbReference type="PROSITE-ProRule" id="PRU00076"/>
    </source>
</evidence>
<evidence type="ECO:0000255" key="4">
    <source>
        <dbReference type="PROSITE-ProRule" id="PRU00122"/>
    </source>
</evidence>
<evidence type="ECO:0000255" key="5">
    <source>
        <dbReference type="PROSITE-ProRule" id="PRU00463"/>
    </source>
</evidence>
<evidence type="ECO:0000269" key="6">
    <source>
    </source>
</evidence>
<evidence type="ECO:0000269" key="7">
    <source>
    </source>
</evidence>
<evidence type="ECO:0000269" key="8">
    <source>
    </source>
</evidence>
<evidence type="ECO:0000269" key="9">
    <source>
    </source>
</evidence>
<evidence type="ECO:0000269" key="10">
    <source>
    </source>
</evidence>
<evidence type="ECO:0000269" key="11">
    <source>
    </source>
</evidence>
<evidence type="ECO:0000269" key="12">
    <source>
    </source>
</evidence>
<evidence type="ECO:0000269" key="13">
    <source>
    </source>
</evidence>
<evidence type="ECO:0000269" key="14">
    <source>
    </source>
</evidence>
<evidence type="ECO:0000269" key="15">
    <source>
    </source>
</evidence>
<evidence type="ECO:0000269" key="16">
    <source>
    </source>
</evidence>
<evidence type="ECO:0000269" key="17">
    <source>
    </source>
</evidence>
<evidence type="ECO:0000269" key="18">
    <source>
    </source>
</evidence>
<evidence type="ECO:0000269" key="19">
    <source>
    </source>
</evidence>
<evidence type="ECO:0000269" key="20">
    <source>
    </source>
</evidence>
<evidence type="ECO:0000269" key="21">
    <source>
    </source>
</evidence>
<evidence type="ECO:0000269" key="22">
    <source>
    </source>
</evidence>
<evidence type="ECO:0000269" key="23">
    <source>
    </source>
</evidence>
<evidence type="ECO:0000269" key="24">
    <source>
    </source>
</evidence>
<evidence type="ECO:0000269" key="25">
    <source>
    </source>
</evidence>
<evidence type="ECO:0000269" key="26">
    <source>
    </source>
</evidence>
<evidence type="ECO:0000269" key="27">
    <source>
    </source>
</evidence>
<evidence type="ECO:0000269" key="28">
    <source>
    </source>
</evidence>
<evidence type="ECO:0000269" key="29">
    <source>
    </source>
</evidence>
<evidence type="ECO:0000269" key="30">
    <source>
    </source>
</evidence>
<evidence type="ECO:0000269" key="31">
    <source>
    </source>
</evidence>
<evidence type="ECO:0000269" key="32">
    <source>
    </source>
</evidence>
<evidence type="ECO:0000269" key="33">
    <source>
    </source>
</evidence>
<evidence type="ECO:0000269" key="34">
    <source>
    </source>
</evidence>
<evidence type="ECO:0000269" key="35">
    <source>
    </source>
</evidence>
<evidence type="ECO:0000269" key="36">
    <source>
    </source>
</evidence>
<evidence type="ECO:0000269" key="37">
    <source>
    </source>
</evidence>
<evidence type="ECO:0000269" key="38">
    <source>
    </source>
</evidence>
<evidence type="ECO:0000269" key="39">
    <source ref="15"/>
</evidence>
<evidence type="ECO:0000305" key="40"/>
<evidence type="ECO:0007829" key="41">
    <source>
        <dbReference type="PDB" id="1Z6C"/>
    </source>
</evidence>
<feature type="signal peptide">
    <location>
        <begin position="1"/>
        <end position="24"/>
    </location>
</feature>
<feature type="propeptide" id="PRO_0000022119">
    <location>
        <begin position="25"/>
        <end position="41"/>
    </location>
</feature>
<feature type="chain" id="PRO_0000022120" description="Vitamin K-dependent protein S">
    <location>
        <begin position="42"/>
        <end position="676"/>
    </location>
</feature>
<feature type="domain" description="Gla" evidence="5">
    <location>
        <begin position="42"/>
        <end position="87"/>
    </location>
</feature>
<feature type="domain" description="EGF-like 1" evidence="3">
    <location>
        <begin position="117"/>
        <end position="155"/>
    </location>
</feature>
<feature type="domain" description="EGF-like 2; calcium-binding" evidence="3">
    <location>
        <begin position="157"/>
        <end position="200"/>
    </location>
</feature>
<feature type="domain" description="EGF-like 3; calcium-binding" evidence="3">
    <location>
        <begin position="201"/>
        <end position="242"/>
    </location>
</feature>
<feature type="domain" description="EGF-like 4; calcium-binding" evidence="3">
    <location>
        <begin position="243"/>
        <end position="283"/>
    </location>
</feature>
<feature type="domain" description="Laminin G-like 1" evidence="4">
    <location>
        <begin position="299"/>
        <end position="475"/>
    </location>
</feature>
<feature type="domain" description="Laminin G-like 2" evidence="4">
    <location>
        <begin position="484"/>
        <end position="666"/>
    </location>
</feature>
<feature type="region of interest" description="Thrombin-sensitive">
    <location>
        <begin position="88"/>
        <end position="116"/>
    </location>
</feature>
<feature type="site" description="Not glycosylated; in variant Heerlen">
    <location>
        <position position="499"/>
    </location>
</feature>
<feature type="modified residue" description="4-carboxyglutamate" evidence="5 25">
    <location>
        <position position="47"/>
    </location>
</feature>
<feature type="modified residue" description="4-carboxyglutamate" evidence="5 25">
    <location>
        <position position="48"/>
    </location>
</feature>
<feature type="modified residue" description="4-carboxyglutamate" evidence="5 25">
    <location>
        <position position="55"/>
    </location>
</feature>
<feature type="modified residue" description="4-carboxyglutamate" evidence="5 25">
    <location>
        <position position="57"/>
    </location>
</feature>
<feature type="modified residue" description="4-carboxyglutamate" evidence="5 25">
    <location>
        <position position="60"/>
    </location>
</feature>
<feature type="modified residue" description="4-carboxyglutamate" evidence="5 25">
    <location>
        <position position="61"/>
    </location>
</feature>
<feature type="modified residue" description="4-carboxyglutamate" evidence="5 25">
    <location>
        <position position="66"/>
    </location>
</feature>
<feature type="modified residue" description="4-carboxyglutamate" evidence="5 25">
    <location>
        <position position="67"/>
    </location>
</feature>
<feature type="modified residue" description="4-carboxyglutamate" evidence="5 25">
    <location>
        <position position="70"/>
    </location>
</feature>
<feature type="modified residue" description="4-carboxyglutamate" evidence="5 25">
    <location>
        <position position="73"/>
    </location>
</feature>
<feature type="modified residue" description="4-carboxyglutamate" evidence="5 25">
    <location>
        <position position="77"/>
    </location>
</feature>
<feature type="modified residue" description="(3R)-3-hydroxyaspartate" evidence="1">
    <location>
        <position position="136"/>
    </location>
</feature>
<feature type="glycosylation site" description="N-linked (GlcNAc...) asparagine">
    <location>
        <position position="499"/>
    </location>
</feature>
<feature type="glycosylation site" description="N-linked (GlcNAc...) asparagine" evidence="2">
    <location>
        <position position="509"/>
    </location>
</feature>
<feature type="glycosylation site" description="N-linked (GlcNAc...) asparagine" evidence="19">
    <location>
        <position position="530"/>
    </location>
</feature>
<feature type="disulfide bond" evidence="1">
    <location>
        <begin position="58"/>
        <end position="63"/>
    </location>
</feature>
<feature type="disulfide bond" evidence="1">
    <location>
        <begin position="121"/>
        <end position="134"/>
    </location>
</feature>
<feature type="disulfide bond" evidence="1">
    <location>
        <begin position="126"/>
        <end position="143"/>
    </location>
</feature>
<feature type="disulfide bond" evidence="1">
    <location>
        <begin position="145"/>
        <end position="154"/>
    </location>
</feature>
<feature type="disulfide bond" evidence="1">
    <location>
        <begin position="161"/>
        <end position="175"/>
    </location>
</feature>
<feature type="disulfide bond" evidence="1">
    <location>
        <begin position="171"/>
        <end position="184"/>
    </location>
</feature>
<feature type="disulfide bond" evidence="1">
    <location>
        <begin position="186"/>
        <end position="199"/>
    </location>
</feature>
<feature type="disulfide bond" evidence="18">
    <location>
        <begin position="205"/>
        <end position="217"/>
    </location>
</feature>
<feature type="disulfide bond" evidence="18">
    <location>
        <begin position="212"/>
        <end position="226"/>
    </location>
</feature>
<feature type="disulfide bond" evidence="18">
    <location>
        <begin position="228"/>
        <end position="241"/>
    </location>
</feature>
<feature type="disulfide bond" evidence="18">
    <location>
        <begin position="247"/>
        <end position="256"/>
    </location>
</feature>
<feature type="disulfide bond" evidence="18">
    <location>
        <begin position="252"/>
        <end position="265"/>
    </location>
</feature>
<feature type="disulfide bond" evidence="18">
    <location>
        <begin position="267"/>
        <end position="282"/>
    </location>
</feature>
<feature type="disulfide bond" evidence="1">
    <location>
        <begin position="449"/>
        <end position="475"/>
    </location>
</feature>
<feature type="disulfide bond" evidence="1">
    <location>
        <begin position="639"/>
        <end position="666"/>
    </location>
</feature>
<feature type="sequence variant" id="VAR_046802" description="In THPH5; reduced mutant protein levels and secretion." evidence="9 21">
    <original>L</original>
    <variation>H</variation>
    <location>
        <position position="15"/>
    </location>
</feature>
<feature type="sequence variant" id="VAR_046803" description="In THPH5; expresses very low/undetectable PROS1 levels compared to wild-type; has impaired secretion; intracellular degradation of unsecreted material is found." evidence="12">
    <original>V</original>
    <variation>E</variation>
    <location>
        <position position="18"/>
    </location>
</feature>
<feature type="sequence variant" id="VAR_046804" description="In THPH5; dbSNP:rs7614835." evidence="29">
    <original>R</original>
    <variation>L</variation>
    <location>
        <position position="40"/>
    </location>
</feature>
<feature type="sequence variant" id="VAR_046805" description="In THPH5; dbSNP:rs963668412." evidence="29">
    <original>R</original>
    <variation>H</variation>
    <location>
        <position position="41"/>
    </location>
</feature>
<feature type="sequence variant" id="VAR_046806" description="In THPH5; dbSNP:rs748630360." evidence="35">
    <original>K</original>
    <variation>E</variation>
    <location>
        <position position="50"/>
    </location>
</feature>
<feature type="sequence variant" id="VAR_046807" description="In THPH5; does not affect PROS1 production but results in 15.2-fold reduced PROS1 activity; has 5.4 fold reduced affinity for anionic phospholipid vesicles (P &lt; 0.0001) and decreased affinity for an antibody specific for the Ca(2+)-dependent conformation of the PROS1 Gla domain." evidence="14">
    <original>G</original>
    <variation>D</variation>
    <location>
        <position position="52"/>
    </location>
</feature>
<feature type="sequence variant" id="VAR_046808" description="In THPH5; dbSNP:rs766423432." evidence="7 17 29 35">
    <original>E</original>
    <variation>A</variation>
    <location>
        <position position="67"/>
    </location>
</feature>
<feature type="sequence variant" id="VAR_046809" description="In THPH5." evidence="38">
    <original>A</original>
    <variation>D</variation>
    <location>
        <position position="68"/>
    </location>
</feature>
<feature type="sequence variant" id="VAR_046810" description="In THPH5." evidence="29">
    <original>F</original>
    <variation>C</variation>
    <location>
        <position position="72"/>
    </location>
</feature>
<feature type="sequence variant" id="VAR_046811" description="In dbSNP:rs73846070." evidence="7 17 29">
    <original>P</original>
    <variation>L</variation>
    <location>
        <position position="76"/>
    </location>
</feature>
<feature type="sequence variant" id="VAR_014666" description="In THPH5; reduces expression of PROS1 by 33.2% (P &lt; 0.001) and activity by 3.6-fold; has only a modest 1.5-fold (P &lt; 0.001) reduced affinity for phospholipid and an antibody specific for the Ca(2+)-dependent conformation of the PROS1 Gla domain; dbSNP:rs6122." evidence="14 29">
    <original>T</original>
    <variation>M</variation>
    <location>
        <position position="78"/>
    </location>
</feature>
<feature type="sequence variant" id="VAR_046812" description="In THPH5; dbSNP:rs557733421." evidence="16">
    <original>V</original>
    <variation>L</variation>
    <location>
        <position position="87"/>
    </location>
</feature>
<feature type="sequence variant" id="VAR_046813" description="In THPH5." evidence="17">
    <original>C</original>
    <variation>Y</variation>
    <location>
        <position position="88"/>
    </location>
</feature>
<feature type="sequence variant" id="VAR_046814" description="In THPH5; produces around 50% of PROS1 levels compared to wild-type; has impaired secretion; intracellular degradation of unsecreted material is found; dbSNP:rs765935815." evidence="12">
    <original>R</original>
    <variation>C</variation>
    <location>
        <position position="90"/>
    </location>
</feature>
<feature type="sequence variant" id="VAR_046815" description="In THPH5; dbSNP:rs200886866." evidence="29">
    <original>R</original>
    <variation>H</variation>
    <location>
        <position position="90"/>
    </location>
</feature>
<feature type="sequence variant" id="VAR_046816" description="In THPH5; dbSNP:rs144526169." evidence="35">
    <original>G</original>
    <variation>E</variation>
    <location>
        <position position="95"/>
    </location>
</feature>
<feature type="sequence variant" id="VAR_046817" description="In THPH5; the activated protein cofactor activity is inhibited by C4BPB with a dose dependency similar to that of wild-type PROS1." evidence="13 38">
    <original>G</original>
    <variation>R</variation>
    <location>
        <position position="95"/>
    </location>
</feature>
<feature type="sequence variant" id="VAR_046818" description="In dbSNP:rs142805170." evidence="9">
    <original>T</original>
    <variation>S</variation>
    <location>
        <position position="98"/>
    </location>
</feature>
<feature type="sequence variant" id="VAR_046819" description="In THPH5; dbSNP:rs778731080." evidence="15">
    <original>R</original>
    <variation>C</variation>
    <location>
        <position position="101"/>
    </location>
</feature>
<feature type="sequence variant" id="VAR_046820" description="In THPH5." evidence="33">
    <original>R</original>
    <variation>S</variation>
    <location>
        <position position="111"/>
    </location>
</feature>
<feature type="sequence variant" id="VAR_046821" description="In THPH5." evidence="16">
    <original>C</original>
    <variation>Y</variation>
    <location>
        <position position="121"/>
    </location>
</feature>
<feature type="sequence variant" id="VAR_046822" description="In THPH5; dbSNP:rs749024073." evidence="7 17">
    <original>D</original>
    <variation>G</variation>
    <location>
        <position position="129"/>
    </location>
</feature>
<feature type="sequence variant" id="VAR_046823" description="In THPH5; dbSNP:rs146366248." evidence="15 17 29">
    <original>T</original>
    <variation>N</variation>
    <location>
        <position position="144"/>
    </location>
</feature>
<feature type="sequence variant" id="VAR_046824" description="In THPH5." evidence="11">
    <original>W</original>
    <variation>C</variation>
    <location>
        <position position="149"/>
    </location>
</feature>
<feature type="sequence variant" id="VAR_046825" description="In THPH5; dbSNP:rs751090951." evidence="33">
    <original>D</original>
    <variation>G</variation>
    <location>
        <position position="157"/>
    </location>
</feature>
<feature type="sequence variant" id="VAR_046826" description="In THPH5." evidence="33">
    <original>C</original>
    <variation>G</variation>
    <location>
        <position position="161"/>
    </location>
</feature>
<feature type="sequence variant" id="VAR_046827" description="In THPH5." evidence="8">
    <original>N</original>
    <variation>Y</variation>
    <location>
        <position position="166"/>
    </location>
</feature>
<feature type="sequence variant" id="VAR_046828" description="In dbSNP:rs144430063." evidence="15">
    <original>N</original>
    <variation>S</variation>
    <location>
        <position position="168"/>
    </location>
</feature>
<feature type="sequence variant" id="VAR_046829" description="In THPH5." evidence="7 17">
    <original>C</original>
    <variation>F</variation>
    <location>
        <position position="175"/>
    </location>
</feature>
<feature type="sequence variant" id="VAR_046830" description="In THPH5; dbSNP:rs779391826." evidence="34 35">
    <original>C</original>
    <variation>Y</variation>
    <location>
        <position position="186"/>
    </location>
</feature>
<feature type="sequence variant" id="VAR_005566" description="In THPH5; Tokushima; the specific activity decreases to 58% of that of the wild-type PROS1; the activated protein cofactor activity is inhibited by C4BPB with a dose dependency similar to that of wild-type PROS1; dbSNP:rs121918474." evidence="13 16 30">
    <original>K</original>
    <variation>E</variation>
    <location>
        <position position="196"/>
    </location>
</feature>
<feature type="sequence variant" id="VAR_046831" description="In THPH5." evidence="17">
    <original>E</original>
    <variation>G</variation>
    <location>
        <position position="204"/>
    </location>
</feature>
<feature type="sequence variant" id="VAR_046832" description="Does not affect protein levels; the mutant is normally secreted; dbSNP:rs41267007." evidence="9 21 24">
    <original>R</original>
    <variation>K</variation>
    <location>
        <position position="233"/>
    </location>
</feature>
<feature type="sequence variant" id="VAR_067302" description="In THPH6; dbSNP:rs387906675." evidence="22">
    <original>Y</original>
    <variation>C</variation>
    <location>
        <position position="234"/>
    </location>
</feature>
<feature type="sequence variant" id="VAR_046833" description="In THPH5." evidence="35">
    <original>C</original>
    <variation>S</variation>
    <location>
        <position position="241"/>
    </location>
</feature>
<feature type="sequence variant" id="VAR_046834" description="In THPH5." evidence="10">
    <original>D</original>
    <variation>N</variation>
    <location>
        <position position="243"/>
    </location>
</feature>
<feature type="sequence variant" id="VAR_046835" description="In THPH5; dbSNP:rs1211117206." evidence="29">
    <original>D</original>
    <variation>G</variation>
    <location>
        <position position="245"/>
    </location>
</feature>
<feature type="sequence variant" id="VAR_046836" description="In THPH5." evidence="8">
    <original>C</original>
    <variation>G</variation>
    <location>
        <position position="247"/>
    </location>
</feature>
<feature type="sequence variant" id="VAR_046837" description="In THPH5; dbSNP:rs1455675811." evidence="29">
    <original>E</original>
    <variation>K</variation>
    <location>
        <position position="249"/>
    </location>
</feature>
<feature type="sequence variant" id="VAR_005567" description="In THPH5; produces around 30% of PROS1 levels compared to wild-type; has impaired secretion; intracellular degradation of unsecreted material is found; dbSNP:rs121918473." evidence="12 27 39">
    <original>N</original>
    <variation>S</variation>
    <location>
        <position position="258"/>
    </location>
</feature>
<feature type="sequence variant" id="VAR_046838" description="In THPH5." evidence="29">
    <original>C</original>
    <variation>R</variation>
    <location>
        <position position="265"/>
    </location>
</feature>
<feature type="sequence variant" id="VAR_046839" description="In THPH5." evidence="29">
    <original>C</original>
    <variation>W</variation>
    <location>
        <position position="265"/>
    </location>
</feature>
<feature type="sequence variant" id="VAR_046840" description="In THPH5; dbSNP:rs777616039." evidence="17">
    <original>Y</original>
    <variation>C</variation>
    <location>
        <position position="266"/>
    </location>
</feature>
<feature type="sequence variant" id="VAR_046841" description="In THPH5." evidence="17">
    <original>C</original>
    <variation>S</variation>
    <location>
        <position position="267"/>
    </location>
</feature>
<feature type="sequence variant" id="VAR_046842" description="In THPH5." evidence="32">
    <original>L</original>
    <variation>P</variation>
    <location>
        <position position="300"/>
    </location>
</feature>
<feature type="sequence variant" id="VAR_046843" description="In THPH5." evidence="35">
    <original>S</original>
    <variation>P</variation>
    <location>
        <position position="324"/>
    </location>
</feature>
<feature type="sequence variant" id="VAR_046844" description="In THPH5." evidence="17">
    <original>G</original>
    <variation>D</variation>
    <location>
        <position position="336"/>
    </location>
</feature>
<feature type="sequence variant" id="VAR_046845" description="In THPH5." evidence="38">
    <original>G</original>
    <variation>S</variation>
    <location>
        <position position="336"/>
    </location>
</feature>
<feature type="sequence variant" id="VAR_046846" description="In THPH5; expresses very low/undetectable PROS1 levels compared to wild-type; has impaired secretion; intracellular degradation of unsecreted material is found." evidence="12">
    <original>G</original>
    <variation>V</variation>
    <location>
        <position position="336"/>
    </location>
</feature>
<feature type="sequence variant" id="VAR_046847" description="In THPH5." evidence="10">
    <original>L</original>
    <variation>P</variation>
    <location>
        <position position="339"/>
    </location>
</feature>
<feature type="sequence variant" id="VAR_046848" description="In THPH5." evidence="28">
    <original>L</original>
    <variation>P</variation>
    <location>
        <position position="351"/>
    </location>
</feature>
<feature type="sequence variant" id="VAR_046849" description="In THPH5; dbSNP:rs780863931." evidence="16">
    <original>R</original>
    <variation>H</variation>
    <location>
        <position position="355"/>
    </location>
</feature>
<feature type="sequence variant" id="VAR_046850" description="In THPH5; dbSNP:rs941433523." evidence="17">
    <original>G</original>
    <variation>R</variation>
    <location>
        <position position="357"/>
    </location>
</feature>
<feature type="sequence variant" id="VAR_046851" description="In THPH5." evidence="33">
    <original>K</original>
    <variation>E</variation>
    <location>
        <position position="364"/>
    </location>
</feature>
<feature type="sequence variant" id="VAR_046852" description="In THPH5." evidence="29">
    <original>D</original>
    <variation>N</variation>
    <location>
        <position position="376"/>
    </location>
</feature>
<feature type="sequence variant" id="VAR_046853" description="In THPH5; dbSNP:rs1223579199." evidence="35">
    <original>G</original>
    <variation>D</variation>
    <location>
        <position position="381"/>
    </location>
</feature>
<feature type="sequence variant" id="VAR_046854" description="In THPH5." evidence="26">
    <original>G</original>
    <variation>V</variation>
    <location>
        <position position="381"/>
    </location>
</feature>
<feature type="sequence variant" id="VAR_046855" description="In THPH5." evidence="11">
    <original>W</original>
    <variation>R</variation>
    <location>
        <position position="383"/>
    </location>
</feature>
<feature type="sequence variant" id="VAR_046856" description="In dbSNP:rs767653920." evidence="29">
    <original>M</original>
    <variation>V</variation>
    <location>
        <position position="385"/>
    </location>
</feature>
<feature type="sequence variant" id="VAR_046857" description="In THPH5." evidence="11">
    <original>E</original>
    <variation>K</variation>
    <location>
        <position position="390"/>
    </location>
</feature>
<feature type="sequence variant" id="VAR_046858" description="In THPH5." evidence="17 33">
    <original>L</original>
    <variation>P</variation>
    <location>
        <position position="446"/>
    </location>
</feature>
<feature type="sequence variant" id="VAR_046859" description="In THPH5." evidence="35">
    <original>C</original>
    <variation>S</variation>
    <location>
        <position position="449"/>
    </location>
</feature>
<feature type="sequence variant" id="VAR_046860" description="In THPH5." evidence="33">
    <original>C</original>
    <variation>R</variation>
    <location>
        <position position="475"/>
    </location>
</feature>
<feature type="sequence variant" id="VAR_014116" description="In THPH5." evidence="6">
    <original>G</original>
    <variation>C</variation>
    <location>
        <position position="482"/>
    </location>
</feature>
<feature type="sequence variant" id="VAR_014117" description="In THPH5; dbSNP:rs1323663956." evidence="6">
    <original>Y</original>
    <variation>C</variation>
    <location>
        <position position="485"/>
    </location>
</feature>
<feature type="sequence variant" id="VAR_046862" description="In THPH5; dbSNP:rs121918472." evidence="33">
    <original>S</original>
    <variation>A</variation>
    <location>
        <position position="501"/>
    </location>
</feature>
<feature type="sequence variant" id="VAR_005568" description="Variant Heerlen; dbSNP:rs121918472." evidence="6 17 23 33 35">
    <original>S</original>
    <variation>P</variation>
    <location>
        <position position="501"/>
    </location>
</feature>
<feature type="sequence variant" id="VAR_046863" description="In THPH5." evidence="26">
    <original>V</original>
    <variation>G</variation>
    <location>
        <position position="508"/>
    </location>
</feature>
<feature type="sequence variant" id="VAR_046864" description="In THPH5." evidence="33">
    <original>V</original>
    <variation>M</variation>
    <location>
        <position position="508"/>
    </location>
</feature>
<feature type="sequence variant" id="VAR_046865" description="In THPH5; secretion of the mutant markedly decreased compared with that of the wild-type; intracellular degradation and impaired secretion of the mutant; dbSNP:rs199469500." evidence="31 33">
    <original>R</original>
    <variation>C</variation>
    <location>
        <position position="515"/>
    </location>
</feature>
<feature type="sequence variant" id="VAR_046866" description="In THPH5." evidence="7 17">
    <original>R</original>
    <variation>P</variation>
    <location>
        <position position="515"/>
    </location>
</feature>
<feature type="sequence variant" id="VAR_046867" description="In THPH5." evidence="17">
    <original>G</original>
    <variation>D</variation>
    <location>
        <position position="521"/>
    </location>
</feature>
<feature type="sequence variant" id="VAR_046868" description="In THPH5." evidence="33">
    <original>A</original>
    <variation>P</variation>
    <location>
        <position position="525"/>
    </location>
</feature>
<feature type="sequence variant" id="VAR_046869" description="In THPH5." evidence="11">
    <original>L</original>
    <variation>S</variation>
    <location>
        <position position="526"/>
    </location>
</feature>
<feature type="sequence variant" id="VAR_046870" description="In THPH5; dbSNP:rs371028997." evidence="33">
    <original>T</original>
    <variation>A</variation>
    <location>
        <position position="532"/>
    </location>
</feature>
<feature type="sequence variant" id="VAR_035981" description="In a colorectal cancer sample; somatic mutation; dbSNP:rs1396452003." evidence="20">
    <original>E</original>
    <variation>G</variation>
    <location>
        <position position="545"/>
    </location>
</feature>
<feature type="sequence variant" id="VAR_046871" description="In THPH5." evidence="28">
    <original>L</original>
    <variation>S</variation>
    <location>
        <position position="552"/>
    </location>
</feature>
<feature type="sequence variant" id="VAR_014118" description="In dbSNP:rs184798444." evidence="6 9 17">
    <original>I</original>
    <variation>M</variation>
    <location>
        <position position="559"/>
    </location>
</feature>
<feature type="sequence variant" id="VAR_014119" description="In THPH5; dbSNP:rs121918476." evidence="6">
    <original>R</original>
    <variation>G</variation>
    <location>
        <position position="561"/>
    </location>
</feature>
<feature type="sequence variant" id="VAR_046872" description="In THPH5; uncertain significance; dbSNP:rs1380889353." evidence="7 17">
    <original>I</original>
    <variation>L</variation>
    <location>
        <position position="562"/>
    </location>
</feature>
<feature type="sequence variant" id="VAR_046873" description="In THPH5." evidence="33">
    <original>C</original>
    <variation>Y</variation>
    <location>
        <position position="568"/>
    </location>
</feature>
<feature type="sequence variant" id="VAR_046874" description="In THPH5." evidence="33">
    <original>L</original>
    <variation>R</variation>
    <location>
        <position position="575"/>
    </location>
</feature>
<feature type="sequence variant" id="VAR_046875" description="In dbSNP:rs139479630." evidence="17">
    <original>N</original>
    <variation>H</variation>
    <location>
        <position position="583"/>
    </location>
</feature>
<feature type="sequence variant" id="VAR_046876" description="In THPH5." evidence="28">
    <original>L</original>
    <variation>Q</variation>
    <location>
        <position position="584"/>
    </location>
</feature>
<feature type="sequence variant" id="VAR_046877" description="In THPH5." evidence="17">
    <original>M</original>
    <variation>K</variation>
    <location>
        <position position="611"/>
    </location>
</feature>
<feature type="sequence variant" id="VAR_046878" description="In THPH5; dbSNP:rs750531364." evidence="8 27 34">
    <original>M</original>
    <variation>T</variation>
    <location>
        <position position="611"/>
    </location>
</feature>
<feature type="sequence variant" id="VAR_046879" description="In THPH5." evidence="28">
    <original>A</original>
    <variation>P</variation>
    <location>
        <position position="616"/>
    </location>
</feature>
<feature type="sequence variant" id="VAR_046880" description="In THPH5." evidence="8">
    <original>L</original>
    <variation>R</variation>
    <location>
        <position position="622"/>
    </location>
</feature>
<feature type="sequence variant" id="VAR_046881" description="In THPH5; the activated protein cofactor activity is inhibited by C4BPB with a dose dependency similar to that of wild-type PROS1; dbSNP:rs202190731." evidence="13">
    <original>T</original>
    <variation>I</variation>
    <location>
        <position position="630"/>
    </location>
</feature>
<feature type="sequence variant" id="VAR_046882" description="In THPH5; shows intracellular degradation and decreased secretion; dbSNP:rs368173480." evidence="13">
    <original>Y</original>
    <variation>C</variation>
    <location>
        <position position="636"/>
    </location>
</feature>
<feature type="sequence variant" id="VAR_046883" description="In THPH5." evidence="7 17">
    <original>G</original>
    <variation>D</variation>
    <location>
        <position position="638"/>
    </location>
</feature>
<feature type="sequence variant" id="VAR_046884" description="In THPH5." evidence="37">
    <original>C</original>
    <variation>F</variation>
    <location>
        <position position="639"/>
    </location>
</feature>
<feature type="sequence variant" id="VAR_046885" description="In THPH5." evidence="17">
    <original>C</original>
    <variation>Y</variation>
    <location>
        <position position="639"/>
    </location>
</feature>
<feature type="sequence variant" id="VAR_046886" description="In THPH5; does not affect protein levels; the mutant is secreted at lower levels compared to wild-type." evidence="9 21">
    <original>M</original>
    <variation>T</variation>
    <location>
        <position position="640"/>
    </location>
</feature>
<feature type="sequence variant" id="VAR_046887" description="In THPH5." evidence="36">
    <original>I</original>
    <variation>S</variation>
    <location>
        <position position="644"/>
    </location>
</feature>
<feature type="sequence variant" id="VAR_046888" description="In THPH5; expresses very low/undetectable PROS1 levels compared to wild-type; has impaired secretion; intracellular degradation of unsecreted material is found." evidence="12">
    <original>H</original>
    <variation>P</variation>
    <location>
        <position position="664"/>
    </location>
</feature>
<feature type="sequence variant" id="VAR_046889" description="In THPH5; dbSNP:rs778685576." evidence="34">
    <original>S</original>
    <variation>L</variation>
    <location>
        <position position="665"/>
    </location>
</feature>
<feature type="sequence variant" id="VAR_046890" description="In THPH5; dbSNP:rs1302089144." evidence="8 32 33 35">
    <original>C</original>
    <variation>R</variation>
    <location>
        <position position="666"/>
    </location>
</feature>
<feature type="sequence variant" id="VAR_046891" description="In THPH5; dbSNP:rs1220553873." evidence="9 16">
    <original>P</original>
    <variation>L</variation>
    <location>
        <position position="667"/>
    </location>
</feature>
<feature type="mutagenesis site" description="Markedly reduced secretion of the mutant." evidence="31">
    <original>R</original>
    <variation>A</variation>
    <variation>E</variation>
    <location>
        <position position="515"/>
    </location>
</feature>
<feature type="mutagenesis site" description="No change in secretion of the mutant." evidence="31">
    <original>R</original>
    <variation>K</variation>
    <location>
        <position position="515"/>
    </location>
</feature>
<feature type="sequence conflict" description="In Ref. 2; AAA36479." evidence="40" ref="2">
    <original>L</original>
    <variation>P</variation>
    <location>
        <position position="11"/>
    </location>
</feature>
<feature type="sequence conflict" description="In Ref. 2; AAA36479." evidence="40" ref="2">
    <original>F</original>
    <variation>L</variation>
    <location>
        <position position="26"/>
    </location>
</feature>
<feature type="strand" evidence="41">
    <location>
        <begin position="204"/>
        <end position="212"/>
    </location>
</feature>
<feature type="strand" evidence="41">
    <location>
        <begin position="227"/>
        <end position="229"/>
    </location>
</feature>
<feature type="strand" evidence="41">
    <location>
        <begin position="233"/>
        <end position="235"/>
    </location>
</feature>
<feature type="turn" evidence="41">
    <location>
        <begin position="236"/>
        <end position="239"/>
    </location>
</feature>
<feature type="strand" evidence="41">
    <location>
        <begin position="240"/>
        <end position="242"/>
    </location>
</feature>
<feature type="helix" evidence="41">
    <location>
        <begin position="246"/>
        <end position="249"/>
    </location>
</feature>
<feature type="strand" evidence="41">
    <location>
        <begin position="253"/>
        <end position="256"/>
    </location>
</feature>
<feature type="strand" evidence="41">
    <location>
        <begin position="260"/>
        <end position="262"/>
    </location>
</feature>
<feature type="strand" evidence="41">
    <location>
        <begin position="269"/>
        <end position="271"/>
    </location>
</feature>
<feature type="strand" evidence="41">
    <location>
        <begin position="279"/>
        <end position="281"/>
    </location>
</feature>
<keyword id="KW-0002">3D-structure</keyword>
<keyword id="KW-0094">Blood coagulation</keyword>
<keyword id="KW-0106">Calcium</keyword>
<keyword id="KW-0165">Cleavage on pair of basic residues</keyword>
<keyword id="KW-0225">Disease variant</keyword>
<keyword id="KW-1015">Disulfide bond</keyword>
<keyword id="KW-0245">EGF-like domain</keyword>
<keyword id="KW-0280">Fibrinolysis</keyword>
<keyword id="KW-0301">Gamma-carboxyglutamic acid</keyword>
<keyword id="KW-0325">Glycoprotein</keyword>
<keyword id="KW-0356">Hemostasis</keyword>
<keyword id="KW-0379">Hydroxylation</keyword>
<keyword id="KW-1267">Proteomics identification</keyword>
<keyword id="KW-1185">Reference proteome</keyword>
<keyword id="KW-0677">Repeat</keyword>
<keyword id="KW-0964">Secreted</keyword>
<keyword id="KW-0732">Signal</keyword>
<keyword id="KW-0792">Thrombophilia</keyword>
<keyword id="KW-0865">Zymogen</keyword>
<sequence>MRVLGGRCGALLACLLLVLPVSEANFLSKQQASQVLVRKRRANSLLEETKQGNLERECIEELCNKEEAREVFENDPETDYFYPKYLVCLRSFQTGLFTAARQSTNAYPDLRSCVNAIPDQCSPLPCNEDGYMSCKDGKASFTCTCKPGWQGEKCEFDINECKDPSNINGGCSQICDNTPGSYHCSCKNGFVMLSNKKDCKDVDECSLKPSICGTAVCKNIPGDFECECPEGYRYNLKSKSCEDIDECSENMCAQLCVNYPGGYTCYCDGKKGFKLAQDQKSCEVVSVCLPLNLDTKYELLYLAEQFAGVVLYLKFRLPEISRFSAEFDFRTYDSEGVILYAESIDHSAWLLIALRGGKIEVQLKNEHTSKITTGGDVINNGLWNMVSVEELEHSISIKIAKEAVMDINKPGPLFKPENGLLETKVYFAGFPRKVESELIKPINPRLDGCIRSWNLMKQGASGIKEIIQEKQNKHCLVTVEKGSYYPGSGIAQFHIDYNNVSSAEGWHVNVTLNIRPSTGTGVMLALVSGNNTVPFAVSLVDSTSEKSQDILLSVENTVIYRIQALSLCSDQQSHLEFRVNRNNLELSTPLKIETISHEDLQRQLAVLDKAMKAKVATYLGGLPDVPFSATPVNAFYNGCMEVNINGVQLDLDEAISKHNDIRAHSCPSVWKKTKNS</sequence>
<organism>
    <name type="scientific">Homo sapiens</name>
    <name type="common">Human</name>
    <dbReference type="NCBI Taxonomy" id="9606"/>
    <lineage>
        <taxon>Eukaryota</taxon>
        <taxon>Metazoa</taxon>
        <taxon>Chordata</taxon>
        <taxon>Craniata</taxon>
        <taxon>Vertebrata</taxon>
        <taxon>Euteleostomi</taxon>
        <taxon>Mammalia</taxon>
        <taxon>Eutheria</taxon>
        <taxon>Euarchontoglires</taxon>
        <taxon>Primates</taxon>
        <taxon>Haplorrhini</taxon>
        <taxon>Catarrhini</taxon>
        <taxon>Hominidae</taxon>
        <taxon>Homo</taxon>
    </lineage>
</organism>
<proteinExistence type="evidence at protein level"/>
<comment type="function">
    <text>Anticoagulant plasma protein; it is a cofactor to activated protein C in the degradation of coagulation factors Va and VIIIa. It helps to prevent coagulation and stimulating fibrinolysis.</text>
</comment>
<comment type="interaction">
    <interactant intactId="EBI-2803380">
        <id>P07225</id>
    </interactant>
    <interactant intactId="EBI-8561769">
        <id>Q5SUL5</id>
        <label>HLA-A</label>
    </interactant>
    <organismsDiffer>false</organismsDiffer>
    <experiments>3</experiments>
</comment>
<comment type="interaction">
    <interactant intactId="EBI-2803380">
        <id>P07225</id>
    </interactant>
    <interactant intactId="EBI-399080">
        <id>Q92993</id>
        <label>KAT5</label>
    </interactant>
    <organismsDiffer>false</organismsDiffer>
    <experiments>3</experiments>
</comment>
<comment type="interaction">
    <interactant intactId="EBI-2803380">
        <id>P07225</id>
    </interactant>
    <interactant intactId="EBI-11742507">
        <id>Q8TAP4-4</id>
        <label>LMO3</label>
    </interactant>
    <organismsDiffer>false</organismsDiffer>
    <experiments>3</experiments>
</comment>
<comment type="interaction">
    <interactant intactId="EBI-2803380">
        <id>P07225</id>
    </interactant>
    <interactant intactId="EBI-748974">
        <id>Q96CV9</id>
        <label>OPTN</label>
    </interactant>
    <organismsDiffer>false</organismsDiffer>
    <experiments>3</experiments>
</comment>
<comment type="interaction">
    <interactant intactId="EBI-2803380">
        <id>P07225</id>
    </interactant>
    <interactant intactId="EBI-25884072">
        <id>P62937-2</id>
        <label>PPIA</label>
    </interactant>
    <organismsDiffer>false</organismsDiffer>
    <experiments>3</experiments>
</comment>
<comment type="interaction">
    <interactant intactId="EBI-2803380">
        <id>P07225</id>
    </interactant>
    <interactant intactId="EBI-1383528">
        <id>P17252</id>
        <label>PRKCA</label>
    </interactant>
    <organismsDiffer>false</organismsDiffer>
    <experiments>3</experiments>
</comment>
<comment type="interaction">
    <interactant intactId="EBI-2803380">
        <id>P07225</id>
    </interactant>
    <interactant intactId="EBI-9090795">
        <id>Q15047-2</id>
        <label>SETDB1</label>
    </interactant>
    <organismsDiffer>false</organismsDiffer>
    <experiments>3</experiments>
</comment>
<comment type="interaction">
    <interactant intactId="EBI-2803380">
        <id>P07225</id>
    </interactant>
    <interactant intactId="EBI-359832">
        <id>P61981</id>
        <label>YWHAG</label>
    </interactant>
    <organismsDiffer>false</organismsDiffer>
    <experiments>3</experiments>
</comment>
<comment type="subcellular location">
    <subcellularLocation>
        <location>Secreted</location>
    </subcellularLocation>
</comment>
<comment type="tissue specificity">
    <text>Plasma.</text>
</comment>
<comment type="PTM">
    <text evidence="1">The iron and 2-oxoglutarate dependent 3-hydroxylation of aspartate and asparagine is (R) stereospecific within EGF domains.</text>
</comment>
<comment type="disease" evidence="6 7 8 9 10 11 12 13 14 15 16 17 21 26 27 28 29 30 31 32 33 34 35 36 37 38 39">
    <disease id="DI-00958">
        <name>Thrombophilia due to protein S deficiency, autosomal dominant</name>
        <acronym>THPH5</acronym>
        <description>A hemostatic disorder characterized by impaired regulation of blood coagulation and a tendency to recurrent venous thrombosis. Based on the plasma levels of total and free PROS1 as well as the serine protease-activated protein C cofactor activity, three types of THPH5 have been described: type I, characterized by reduced total and free PROS1 levels together with reduced anticoagulant activity; type III, in which only free PROS1 antigen and PROS1 activity levels are reduced; and the rare type II which is characterized by normal concentrations of both total and free PROS1 antigen, but low cofactor activity.</description>
        <dbReference type="MIM" id="612336"/>
    </disease>
    <text>The disease is caused by variants affecting the gene represented in this entry.</text>
</comment>
<comment type="disease" evidence="22">
    <disease id="DI-03365">
        <name>Thrombophilia due to protein S deficiency, autosomal recessive</name>
        <acronym>THPH6</acronym>
        <description>A very rare and severe hematologic disorder resulting in thrombosis and secondary hemorrhage usually beginning in early infancy. Some affected individuals develop neonatal purpura fulminans, multifocal thrombosis, or intracranial hemorrhage.</description>
        <dbReference type="MIM" id="614514"/>
    </disease>
    <text>The disease is caused by variants affecting the gene represented in this entry.</text>
</comment>
<comment type="sequence caution" evidence="40">
    <conflict type="erroneous gene model prediction">
        <sequence resource="EMBL-CDS" id="AAP45054"/>
    </conflict>
</comment>
<name>PROS_HUMAN</name>
<gene>
    <name type="primary">PROS1</name>
    <name type="synonym">PROS</name>
</gene>
<protein>
    <recommendedName>
        <fullName>Vitamin K-dependent protein S</fullName>
    </recommendedName>
</protein>
<dbReference type="EMBL" id="Y00692">
    <property type="protein sequence ID" value="CAA68687.1"/>
    <property type="molecule type" value="mRNA"/>
</dbReference>
<dbReference type="EMBL" id="Y00692">
    <property type="protein sequence ID" value="CAA68688.1"/>
    <property type="status" value="ALT_SEQ"/>
    <property type="molecule type" value="mRNA"/>
</dbReference>
<dbReference type="EMBL" id="M15036">
    <property type="protein sequence ID" value="AAA36479.1"/>
    <property type="molecule type" value="mRNA"/>
</dbReference>
<dbReference type="EMBL" id="M57853">
    <property type="protein sequence ID" value="AAA60357.1"/>
    <property type="molecule type" value="Genomic_DNA"/>
</dbReference>
<dbReference type="EMBL" id="M57840">
    <property type="protein sequence ID" value="AAA60357.1"/>
    <property type="status" value="JOINED"/>
    <property type="molecule type" value="Genomic_DNA"/>
</dbReference>
<dbReference type="EMBL" id="M57841">
    <property type="protein sequence ID" value="AAA60357.1"/>
    <property type="status" value="JOINED"/>
    <property type="molecule type" value="Genomic_DNA"/>
</dbReference>
<dbReference type="EMBL" id="M57842">
    <property type="protein sequence ID" value="AAA60357.1"/>
    <property type="status" value="JOINED"/>
    <property type="molecule type" value="Genomic_DNA"/>
</dbReference>
<dbReference type="EMBL" id="M57844">
    <property type="protein sequence ID" value="AAA60357.1"/>
    <property type="status" value="JOINED"/>
    <property type="molecule type" value="Genomic_DNA"/>
</dbReference>
<dbReference type="EMBL" id="M57845">
    <property type="protein sequence ID" value="AAA60357.1"/>
    <property type="status" value="JOINED"/>
    <property type="molecule type" value="Genomic_DNA"/>
</dbReference>
<dbReference type="EMBL" id="M57846">
    <property type="protein sequence ID" value="AAA60357.1"/>
    <property type="status" value="JOINED"/>
    <property type="molecule type" value="Genomic_DNA"/>
</dbReference>
<dbReference type="EMBL" id="M57847">
    <property type="protein sequence ID" value="AAA60357.1"/>
    <property type="status" value="JOINED"/>
    <property type="molecule type" value="Genomic_DNA"/>
</dbReference>
<dbReference type="EMBL" id="M57848">
    <property type="protein sequence ID" value="AAA60357.1"/>
    <property type="status" value="JOINED"/>
    <property type="molecule type" value="Genomic_DNA"/>
</dbReference>
<dbReference type="EMBL" id="M57849">
    <property type="protein sequence ID" value="AAA60357.1"/>
    <property type="status" value="JOINED"/>
    <property type="molecule type" value="Genomic_DNA"/>
</dbReference>
<dbReference type="EMBL" id="M57850">
    <property type="protein sequence ID" value="AAA60357.1"/>
    <property type="status" value="JOINED"/>
    <property type="molecule type" value="Genomic_DNA"/>
</dbReference>
<dbReference type="EMBL" id="M57851">
    <property type="protein sequence ID" value="AAA60357.1"/>
    <property type="status" value="JOINED"/>
    <property type="molecule type" value="Genomic_DNA"/>
</dbReference>
<dbReference type="EMBL" id="M57852">
    <property type="protein sequence ID" value="AAA60357.1"/>
    <property type="status" value="JOINED"/>
    <property type="molecule type" value="Genomic_DNA"/>
</dbReference>
<dbReference type="EMBL" id="AH002948">
    <property type="protein sequence ID" value="AAA60180.1"/>
    <property type="molecule type" value="Genomic_DNA"/>
</dbReference>
<dbReference type="EMBL" id="AK292994">
    <property type="protein sequence ID" value="BAF85683.1"/>
    <property type="molecule type" value="mRNA"/>
</dbReference>
<dbReference type="EMBL" id="AY308744">
    <property type="protein sequence ID" value="AAP45054.1"/>
    <property type="status" value="ALT_SEQ"/>
    <property type="molecule type" value="Genomic_DNA"/>
</dbReference>
<dbReference type="EMBL" id="CH471052">
    <property type="protein sequence ID" value="EAW79903.1"/>
    <property type="molecule type" value="Genomic_DNA"/>
</dbReference>
<dbReference type="EMBL" id="CH471052">
    <property type="protein sequence ID" value="EAW79905.1"/>
    <property type="molecule type" value="Genomic_DNA"/>
</dbReference>
<dbReference type="EMBL" id="BC015801">
    <property type="protein sequence ID" value="AAH15801.1"/>
    <property type="molecule type" value="mRNA"/>
</dbReference>
<dbReference type="CCDS" id="CCDS2923.1"/>
<dbReference type="PIR" id="A35610">
    <property type="entry name" value="KXHUS"/>
</dbReference>
<dbReference type="RefSeq" id="NP_000304.2">
    <property type="nucleotide sequence ID" value="NM_000313.4"/>
</dbReference>
<dbReference type="RefSeq" id="NP_001301006.1">
    <property type="nucleotide sequence ID" value="NM_001314077.1"/>
</dbReference>
<dbReference type="PDB" id="1Z6C">
    <property type="method" value="NMR"/>
    <property type="chains" value="A=200-286"/>
</dbReference>
<dbReference type="PDBsum" id="1Z6C"/>
<dbReference type="SMR" id="P07225"/>
<dbReference type="BioGRID" id="111611">
    <property type="interactions" value="85"/>
</dbReference>
<dbReference type="FunCoup" id="P07225">
    <property type="interactions" value="364"/>
</dbReference>
<dbReference type="IntAct" id="P07225">
    <property type="interactions" value="44"/>
</dbReference>
<dbReference type="STRING" id="9606.ENSP00000377783"/>
<dbReference type="DrugBank" id="DB00055">
    <property type="generic name" value="Drotrecogin alfa"/>
</dbReference>
<dbReference type="DrugBank" id="DB09332">
    <property type="generic name" value="Kappadione"/>
</dbReference>
<dbReference type="DrugBank" id="DB00170">
    <property type="generic name" value="Menadione"/>
</dbReference>
<dbReference type="DrugBank" id="DB00464">
    <property type="generic name" value="Sodium tetradecyl sulfate"/>
</dbReference>
<dbReference type="GlyConnect" id="2090">
    <property type="glycosylation" value="1 N-Linked glycan (1 site)"/>
</dbReference>
<dbReference type="GlyCosmos" id="P07225">
    <property type="glycosylation" value="5 sites, 3 glycans"/>
</dbReference>
<dbReference type="GlyGen" id="P07225">
    <property type="glycosylation" value="6 sites, 2 N-linked glycans (1 site), 2 O-linked glycans (3 sites)"/>
</dbReference>
<dbReference type="iPTMnet" id="P07225"/>
<dbReference type="PhosphoSitePlus" id="P07225"/>
<dbReference type="BioMuta" id="PROS1"/>
<dbReference type="DMDM" id="131086"/>
<dbReference type="CPTAC" id="non-CPTAC-2705"/>
<dbReference type="jPOST" id="P07225"/>
<dbReference type="MassIVE" id="P07225"/>
<dbReference type="PaxDb" id="9606-ENSP00000377783"/>
<dbReference type="PeptideAtlas" id="P07225"/>
<dbReference type="ProteomicsDB" id="51975"/>
<dbReference type="ABCD" id="P07225">
    <property type="antibodies" value="29 sequenced antibodies"/>
</dbReference>
<dbReference type="Antibodypedia" id="858">
    <property type="antibodies" value="456 antibodies from 40 providers"/>
</dbReference>
<dbReference type="DNASU" id="5627"/>
<dbReference type="Ensembl" id="ENST00000348974.5">
    <property type="protein sequence ID" value="ENSP00000330021.7"/>
    <property type="gene ID" value="ENSG00000184500.16"/>
</dbReference>
<dbReference type="Ensembl" id="ENST00000394236.9">
    <property type="protein sequence ID" value="ENSP00000377783.3"/>
    <property type="gene ID" value="ENSG00000184500.16"/>
</dbReference>
<dbReference type="GeneID" id="5627"/>
<dbReference type="KEGG" id="hsa:5627"/>
<dbReference type="MANE-Select" id="ENST00000394236.9">
    <property type="protein sequence ID" value="ENSP00000377783.3"/>
    <property type="RefSeq nucleotide sequence ID" value="NM_000313.4"/>
    <property type="RefSeq protein sequence ID" value="NP_000304.2"/>
</dbReference>
<dbReference type="UCSC" id="uc003drb.5">
    <property type="organism name" value="human"/>
</dbReference>
<dbReference type="AGR" id="HGNC:9456"/>
<dbReference type="CTD" id="5627"/>
<dbReference type="DisGeNET" id="5627"/>
<dbReference type="GeneCards" id="PROS1"/>
<dbReference type="HGNC" id="HGNC:9456">
    <property type="gene designation" value="PROS1"/>
</dbReference>
<dbReference type="HPA" id="ENSG00000184500">
    <property type="expression patterns" value="Tissue enhanced (choroid plexus, liver)"/>
</dbReference>
<dbReference type="MalaCards" id="PROS1"/>
<dbReference type="MIM" id="176880">
    <property type="type" value="gene"/>
</dbReference>
<dbReference type="MIM" id="612336">
    <property type="type" value="phenotype"/>
</dbReference>
<dbReference type="MIM" id="614514">
    <property type="type" value="phenotype"/>
</dbReference>
<dbReference type="neXtProt" id="NX_P07225"/>
<dbReference type="OpenTargets" id="ENSG00000184500"/>
<dbReference type="Orphanet" id="743">
    <property type="disease" value="Severe hereditary thrombophilia due to congenital protein S deficiency"/>
</dbReference>
<dbReference type="PharmGKB" id="PA33809"/>
<dbReference type="VEuPathDB" id="HostDB:ENSG00000184500"/>
<dbReference type="eggNOG" id="ENOG502QSNF">
    <property type="taxonomic scope" value="Eukaryota"/>
</dbReference>
<dbReference type="GeneTree" id="ENSGT00940000154035"/>
<dbReference type="HOGENOM" id="CLU_026236_0_0_1"/>
<dbReference type="InParanoid" id="P07225"/>
<dbReference type="OMA" id="GQAAFTC"/>
<dbReference type="OrthoDB" id="4062651at2759"/>
<dbReference type="PAN-GO" id="P07225">
    <property type="GO annotations" value="1 GO annotation based on evolutionary models"/>
</dbReference>
<dbReference type="PhylomeDB" id="P07225"/>
<dbReference type="TreeFam" id="TF352157"/>
<dbReference type="PathwayCommons" id="P07225"/>
<dbReference type="Reactome" id="R-HSA-114608">
    <property type="pathway name" value="Platelet degranulation"/>
</dbReference>
<dbReference type="Reactome" id="R-HSA-140837">
    <property type="pathway name" value="Intrinsic Pathway of Fibrin Clot Formation"/>
</dbReference>
<dbReference type="Reactome" id="R-HSA-140875">
    <property type="pathway name" value="Common Pathway of Fibrin Clot Formation"/>
</dbReference>
<dbReference type="Reactome" id="R-HSA-159740">
    <property type="pathway name" value="Gamma-carboxylation of protein precursors"/>
</dbReference>
<dbReference type="Reactome" id="R-HSA-159763">
    <property type="pathway name" value="Transport of gamma-carboxylated protein precursors from the endoplasmic reticulum to the Golgi apparatus"/>
</dbReference>
<dbReference type="Reactome" id="R-HSA-159782">
    <property type="pathway name" value="Removal of aminoterminal propeptides from gamma-carboxylated proteins"/>
</dbReference>
<dbReference type="Reactome" id="R-HSA-202733">
    <property type="pathway name" value="Cell surface interactions at the vascular wall"/>
</dbReference>
<dbReference type="Reactome" id="R-HSA-977606">
    <property type="pathway name" value="Regulation of Complement cascade"/>
</dbReference>
<dbReference type="SignaLink" id="P07225"/>
<dbReference type="SIGNOR" id="P07225"/>
<dbReference type="BioGRID-ORCS" id="5627">
    <property type="hits" value="18 hits in 1164 CRISPR screens"/>
</dbReference>
<dbReference type="ChiTaRS" id="PROS1">
    <property type="organism name" value="human"/>
</dbReference>
<dbReference type="EvolutionaryTrace" id="P07225"/>
<dbReference type="GeneWiki" id="Protein_S"/>
<dbReference type="GenomeRNAi" id="5627"/>
<dbReference type="Pharos" id="P07225">
    <property type="development level" value="Tbio"/>
</dbReference>
<dbReference type="PRO" id="PR:P07225"/>
<dbReference type="Proteomes" id="UP000005640">
    <property type="component" value="Chromosome 3"/>
</dbReference>
<dbReference type="RNAct" id="P07225">
    <property type="molecule type" value="protein"/>
</dbReference>
<dbReference type="Bgee" id="ENSG00000184500">
    <property type="expression patterns" value="Expressed in choroid plexus epithelium and 196 other cell types or tissues"/>
</dbReference>
<dbReference type="ExpressionAtlas" id="P07225">
    <property type="expression patterns" value="baseline and differential"/>
</dbReference>
<dbReference type="GO" id="GO:0072562">
    <property type="term" value="C:blood microparticle"/>
    <property type="evidence" value="ECO:0007005"/>
    <property type="project" value="UniProtKB"/>
</dbReference>
<dbReference type="GO" id="GO:0005789">
    <property type="term" value="C:endoplasmic reticulum membrane"/>
    <property type="evidence" value="ECO:0000304"/>
    <property type="project" value="Reactome"/>
</dbReference>
<dbReference type="GO" id="GO:0070062">
    <property type="term" value="C:extracellular exosome"/>
    <property type="evidence" value="ECO:0007005"/>
    <property type="project" value="UniProtKB"/>
</dbReference>
<dbReference type="GO" id="GO:0005576">
    <property type="term" value="C:extracellular region"/>
    <property type="evidence" value="ECO:0000304"/>
    <property type="project" value="Reactome"/>
</dbReference>
<dbReference type="GO" id="GO:0005615">
    <property type="term" value="C:extracellular space"/>
    <property type="evidence" value="ECO:0000314"/>
    <property type="project" value="BHF-UCL"/>
</dbReference>
<dbReference type="GO" id="GO:0005796">
    <property type="term" value="C:Golgi lumen"/>
    <property type="evidence" value="ECO:0000304"/>
    <property type="project" value="Reactome"/>
</dbReference>
<dbReference type="GO" id="GO:0000139">
    <property type="term" value="C:Golgi membrane"/>
    <property type="evidence" value="ECO:0000304"/>
    <property type="project" value="Reactome"/>
</dbReference>
<dbReference type="GO" id="GO:0005886">
    <property type="term" value="C:plasma membrane"/>
    <property type="evidence" value="ECO:0000304"/>
    <property type="project" value="Reactome"/>
</dbReference>
<dbReference type="GO" id="GO:0031093">
    <property type="term" value="C:platelet alpha granule lumen"/>
    <property type="evidence" value="ECO:0000304"/>
    <property type="project" value="Reactome"/>
</dbReference>
<dbReference type="GO" id="GO:0005509">
    <property type="term" value="F:calcium ion binding"/>
    <property type="evidence" value="ECO:0007669"/>
    <property type="project" value="InterPro"/>
</dbReference>
<dbReference type="GO" id="GO:0004866">
    <property type="term" value="F:endopeptidase inhibitor activity"/>
    <property type="evidence" value="ECO:0000304"/>
    <property type="project" value="ProtInc"/>
</dbReference>
<dbReference type="GO" id="GO:0007596">
    <property type="term" value="P:blood coagulation"/>
    <property type="evidence" value="ECO:0000304"/>
    <property type="project" value="ProtInc"/>
</dbReference>
<dbReference type="GO" id="GO:0042730">
    <property type="term" value="P:fibrinolysis"/>
    <property type="evidence" value="ECO:0007669"/>
    <property type="project" value="UniProtKB-KW"/>
</dbReference>
<dbReference type="GO" id="GO:0051897">
    <property type="term" value="P:positive regulation of phosphatidylinositol 3-kinase/protein kinase B signal transduction"/>
    <property type="evidence" value="ECO:0007669"/>
    <property type="project" value="Ensembl"/>
</dbReference>
<dbReference type="CDD" id="cd00054">
    <property type="entry name" value="EGF_CA"/>
    <property type="match status" value="3"/>
</dbReference>
<dbReference type="CDD" id="cd00110">
    <property type="entry name" value="LamG"/>
    <property type="match status" value="1"/>
</dbReference>
<dbReference type="FunFam" id="2.10.25.10:FF:000240">
    <property type="entry name" value="Vitamin K-dependent protein S"/>
    <property type="match status" value="1"/>
</dbReference>
<dbReference type="FunFam" id="2.10.25.10:FF:000426">
    <property type="entry name" value="Vitamin K-dependent protein S"/>
    <property type="match status" value="1"/>
</dbReference>
<dbReference type="FunFam" id="2.10.25.10:FF:000584">
    <property type="entry name" value="Vitamin K-dependent protein S"/>
    <property type="match status" value="1"/>
</dbReference>
<dbReference type="FunFam" id="2.60.120.200:FF:000129">
    <property type="entry name" value="Vitamin K-dependent protein S"/>
    <property type="match status" value="1"/>
</dbReference>
<dbReference type="FunFam" id="2.60.120.200:FF:000077">
    <property type="entry name" value="vitamin K-dependent protein S"/>
    <property type="match status" value="1"/>
</dbReference>
<dbReference type="FunFam" id="4.10.740.10:FF:000001">
    <property type="entry name" value="vitamin K-dependent protein S"/>
    <property type="match status" value="1"/>
</dbReference>
<dbReference type="Gene3D" id="2.60.120.200">
    <property type="match status" value="2"/>
</dbReference>
<dbReference type="Gene3D" id="4.10.740.10">
    <property type="entry name" value="Coagulation Factor IX"/>
    <property type="match status" value="1"/>
</dbReference>
<dbReference type="Gene3D" id="2.10.25.10">
    <property type="entry name" value="Laminin"/>
    <property type="match status" value="4"/>
</dbReference>
<dbReference type="InterPro" id="IPR017857">
    <property type="entry name" value="Coagulation_fac-like_Gla_dom"/>
</dbReference>
<dbReference type="InterPro" id="IPR013320">
    <property type="entry name" value="ConA-like_dom_sf"/>
</dbReference>
<dbReference type="InterPro" id="IPR001881">
    <property type="entry name" value="EGF-like_Ca-bd_dom"/>
</dbReference>
<dbReference type="InterPro" id="IPR013032">
    <property type="entry name" value="EGF-like_CS"/>
</dbReference>
<dbReference type="InterPro" id="IPR000742">
    <property type="entry name" value="EGF-like_dom"/>
</dbReference>
<dbReference type="InterPro" id="IPR000152">
    <property type="entry name" value="EGF-type_Asp/Asn_hydroxyl_site"/>
</dbReference>
<dbReference type="InterPro" id="IPR018097">
    <property type="entry name" value="EGF_Ca-bd_CS"/>
</dbReference>
<dbReference type="InterPro" id="IPR051145">
    <property type="entry name" value="GAS-SHBG-PROS"/>
</dbReference>
<dbReference type="InterPro" id="IPR035972">
    <property type="entry name" value="GLA-like_dom_SF"/>
</dbReference>
<dbReference type="InterPro" id="IPR000294">
    <property type="entry name" value="GLA_domain"/>
</dbReference>
<dbReference type="InterPro" id="IPR009030">
    <property type="entry name" value="Growth_fac_rcpt_cys_sf"/>
</dbReference>
<dbReference type="InterPro" id="IPR001791">
    <property type="entry name" value="Laminin_G"/>
</dbReference>
<dbReference type="InterPro" id="IPR049883">
    <property type="entry name" value="NOTCH1_EGF-like"/>
</dbReference>
<dbReference type="PANTHER" id="PTHR24040">
    <property type="entry name" value="LAMININ G-LIKE DOMAIN-CONTAINING PROTEIN"/>
    <property type="match status" value="1"/>
</dbReference>
<dbReference type="PANTHER" id="PTHR24040:SF0">
    <property type="entry name" value="VITAMIN K-DEPENDENT PROTEIN S"/>
    <property type="match status" value="1"/>
</dbReference>
<dbReference type="Pfam" id="PF07645">
    <property type="entry name" value="EGF_CA"/>
    <property type="match status" value="2"/>
</dbReference>
<dbReference type="Pfam" id="PF14670">
    <property type="entry name" value="FXa_inhibition"/>
    <property type="match status" value="1"/>
</dbReference>
<dbReference type="Pfam" id="PF00594">
    <property type="entry name" value="Gla"/>
    <property type="match status" value="1"/>
</dbReference>
<dbReference type="Pfam" id="PF12661">
    <property type="entry name" value="hEGF"/>
    <property type="match status" value="1"/>
</dbReference>
<dbReference type="Pfam" id="PF00054">
    <property type="entry name" value="Laminin_G_1"/>
    <property type="match status" value="1"/>
</dbReference>
<dbReference type="Pfam" id="PF02210">
    <property type="entry name" value="Laminin_G_2"/>
    <property type="match status" value="1"/>
</dbReference>
<dbReference type="PRINTS" id="PR00001">
    <property type="entry name" value="GLABLOOD"/>
</dbReference>
<dbReference type="SMART" id="SM00181">
    <property type="entry name" value="EGF"/>
    <property type="match status" value="4"/>
</dbReference>
<dbReference type="SMART" id="SM00179">
    <property type="entry name" value="EGF_CA"/>
    <property type="match status" value="4"/>
</dbReference>
<dbReference type="SMART" id="SM00069">
    <property type="entry name" value="GLA"/>
    <property type="match status" value="1"/>
</dbReference>
<dbReference type="SMART" id="SM00282">
    <property type="entry name" value="LamG"/>
    <property type="match status" value="2"/>
</dbReference>
<dbReference type="SUPFAM" id="SSF49899">
    <property type="entry name" value="Concanavalin A-like lectins/glucanases"/>
    <property type="match status" value="2"/>
</dbReference>
<dbReference type="SUPFAM" id="SSF57630">
    <property type="entry name" value="GLA-domain"/>
    <property type="match status" value="1"/>
</dbReference>
<dbReference type="SUPFAM" id="SSF57184">
    <property type="entry name" value="Growth factor receptor domain"/>
    <property type="match status" value="1"/>
</dbReference>
<dbReference type="PROSITE" id="PS00010">
    <property type="entry name" value="ASX_HYDROXYL"/>
    <property type="match status" value="4"/>
</dbReference>
<dbReference type="PROSITE" id="PS00022">
    <property type="entry name" value="EGF_1"/>
    <property type="match status" value="1"/>
</dbReference>
<dbReference type="PROSITE" id="PS01186">
    <property type="entry name" value="EGF_2"/>
    <property type="match status" value="3"/>
</dbReference>
<dbReference type="PROSITE" id="PS50026">
    <property type="entry name" value="EGF_3"/>
    <property type="match status" value="4"/>
</dbReference>
<dbReference type="PROSITE" id="PS01187">
    <property type="entry name" value="EGF_CA"/>
    <property type="match status" value="3"/>
</dbReference>
<dbReference type="PROSITE" id="PS00011">
    <property type="entry name" value="GLA_1"/>
    <property type="match status" value="1"/>
</dbReference>
<dbReference type="PROSITE" id="PS50998">
    <property type="entry name" value="GLA_2"/>
    <property type="match status" value="1"/>
</dbReference>
<dbReference type="PROSITE" id="PS50025">
    <property type="entry name" value="LAM_G_DOMAIN"/>
    <property type="match status" value="2"/>
</dbReference>
<accession>P07225</accession>
<accession>A8KAC9</accession>
<accession>D3DN28</accession>
<accession>Q15518</accession>
<accession>Q7Z715</accession>
<accession>Q9UCZ8</accession>
<reference key="1">
    <citation type="journal article" date="1987" name="FEBS Lett.">
        <title>Human protein S cDNA encodes Phe-16 and Tyr 222 in consensus sequences for the post-translational processing.</title>
        <authorList>
            <person name="Ploos van Amstel H.K."/>
            <person name="van der Zanden A.L."/>
            <person name="Reitsma P.H."/>
            <person name="Bertina R.M."/>
        </authorList>
    </citation>
    <scope>NUCLEOTIDE SEQUENCE [MRNA]</scope>
    <scope>GAMMA-CARBOXYGLUTAMATION AT GLU-47; GLU-48; GLU-55; GLU-57; GLU-60; GLU-61; GLU-66; GLU-67; GLU-70; GLU-73 AND GLU-77</scope>
</reference>
<reference key="2">
    <citation type="journal article" date="1987" name="Proc. Natl. Acad. Sci. U.S.A.">
        <title>Cloning and characterization of human liver cDNA encoding a protein S precursor.</title>
        <authorList>
            <person name="Hoskins J."/>
            <person name="Norman D.K."/>
            <person name="Beckmann R.J."/>
            <person name="Long G.L."/>
        </authorList>
    </citation>
    <scope>NUCLEOTIDE SEQUENCE [MRNA]</scope>
</reference>
<reference key="3">
    <citation type="journal article" date="1990" name="Biochemistry">
        <title>Organization of the human protein S genes.</title>
        <authorList>
            <person name="Schmidel D.K."/>
            <person name="Tatro A.V."/>
            <person name="Phelps L.G."/>
            <person name="Tomczak J.A."/>
            <person name="Long G.L."/>
        </authorList>
    </citation>
    <scope>NUCLEOTIDE SEQUENCE [GENOMIC DNA]</scope>
</reference>
<reference key="4">
    <citation type="journal article" date="1990" name="Biochemistry">
        <title>Intron-exon organization of the active human protein S gene PS alpha and its pseudogene PS beta: duplication and silencing during primate evolution.</title>
        <authorList>
            <person name="Ploos van Amstel H.K."/>
            <person name="Reitsma P.H."/>
            <person name="der Logt C.P."/>
            <person name="Bertina R.M."/>
        </authorList>
    </citation>
    <scope>NUCLEOTIDE SEQUENCE [GENOMIC DNA]</scope>
    <source>
        <tissue>Liver</tissue>
    </source>
</reference>
<reference key="5">
    <citation type="journal article" date="2004" name="Nat. Genet.">
        <title>Complete sequencing and characterization of 21,243 full-length human cDNAs.</title>
        <authorList>
            <person name="Ota T."/>
            <person name="Suzuki Y."/>
            <person name="Nishikawa T."/>
            <person name="Otsuki T."/>
            <person name="Sugiyama T."/>
            <person name="Irie R."/>
            <person name="Wakamatsu A."/>
            <person name="Hayashi K."/>
            <person name="Sato H."/>
            <person name="Nagai K."/>
            <person name="Kimura K."/>
            <person name="Makita H."/>
            <person name="Sekine M."/>
            <person name="Obayashi M."/>
            <person name="Nishi T."/>
            <person name="Shibahara T."/>
            <person name="Tanaka T."/>
            <person name="Ishii S."/>
            <person name="Yamamoto J."/>
            <person name="Saito K."/>
            <person name="Kawai Y."/>
            <person name="Isono Y."/>
            <person name="Nakamura Y."/>
            <person name="Nagahari K."/>
            <person name="Murakami K."/>
            <person name="Yasuda T."/>
            <person name="Iwayanagi T."/>
            <person name="Wagatsuma M."/>
            <person name="Shiratori A."/>
            <person name="Sudo H."/>
            <person name="Hosoiri T."/>
            <person name="Kaku Y."/>
            <person name="Kodaira H."/>
            <person name="Kondo H."/>
            <person name="Sugawara M."/>
            <person name="Takahashi M."/>
            <person name="Kanda K."/>
            <person name="Yokoi T."/>
            <person name="Furuya T."/>
            <person name="Kikkawa E."/>
            <person name="Omura Y."/>
            <person name="Abe K."/>
            <person name="Kamihara K."/>
            <person name="Katsuta N."/>
            <person name="Sato K."/>
            <person name="Tanikawa M."/>
            <person name="Yamazaki M."/>
            <person name="Ninomiya K."/>
            <person name="Ishibashi T."/>
            <person name="Yamashita H."/>
            <person name="Murakawa K."/>
            <person name="Fujimori K."/>
            <person name="Tanai H."/>
            <person name="Kimata M."/>
            <person name="Watanabe M."/>
            <person name="Hiraoka S."/>
            <person name="Chiba Y."/>
            <person name="Ishida S."/>
            <person name="Ono Y."/>
            <person name="Takiguchi S."/>
            <person name="Watanabe S."/>
            <person name="Yosida M."/>
            <person name="Hotuta T."/>
            <person name="Kusano J."/>
            <person name="Kanehori K."/>
            <person name="Takahashi-Fujii A."/>
            <person name="Hara H."/>
            <person name="Tanase T.-O."/>
            <person name="Nomura Y."/>
            <person name="Togiya S."/>
            <person name="Komai F."/>
            <person name="Hara R."/>
            <person name="Takeuchi K."/>
            <person name="Arita M."/>
            <person name="Imose N."/>
            <person name="Musashino K."/>
            <person name="Yuuki H."/>
            <person name="Oshima A."/>
            <person name="Sasaki N."/>
            <person name="Aotsuka S."/>
            <person name="Yoshikawa Y."/>
            <person name="Matsunawa H."/>
            <person name="Ichihara T."/>
            <person name="Shiohata N."/>
            <person name="Sano S."/>
            <person name="Moriya S."/>
            <person name="Momiyama H."/>
            <person name="Satoh N."/>
            <person name="Takami S."/>
            <person name="Terashima Y."/>
            <person name="Suzuki O."/>
            <person name="Nakagawa S."/>
            <person name="Senoh A."/>
            <person name="Mizoguchi H."/>
            <person name="Goto Y."/>
            <person name="Shimizu F."/>
            <person name="Wakebe H."/>
            <person name="Hishigaki H."/>
            <person name="Watanabe T."/>
            <person name="Sugiyama A."/>
            <person name="Takemoto M."/>
            <person name="Kawakami B."/>
            <person name="Yamazaki M."/>
            <person name="Watanabe K."/>
            <person name="Kumagai A."/>
            <person name="Itakura S."/>
            <person name="Fukuzumi Y."/>
            <person name="Fujimori Y."/>
            <person name="Komiyama M."/>
            <person name="Tashiro H."/>
            <person name="Tanigami A."/>
            <person name="Fujiwara T."/>
            <person name="Ono T."/>
            <person name="Yamada K."/>
            <person name="Fujii Y."/>
            <person name="Ozaki K."/>
            <person name="Hirao M."/>
            <person name="Ohmori Y."/>
            <person name="Kawabata A."/>
            <person name="Hikiji T."/>
            <person name="Kobatake N."/>
            <person name="Inagaki H."/>
            <person name="Ikema Y."/>
            <person name="Okamoto S."/>
            <person name="Okitani R."/>
            <person name="Kawakami T."/>
            <person name="Noguchi S."/>
            <person name="Itoh T."/>
            <person name="Shigeta K."/>
            <person name="Senba T."/>
            <person name="Matsumura K."/>
            <person name="Nakajima Y."/>
            <person name="Mizuno T."/>
            <person name="Morinaga M."/>
            <person name="Sasaki M."/>
            <person name="Togashi T."/>
            <person name="Oyama M."/>
            <person name="Hata H."/>
            <person name="Watanabe M."/>
            <person name="Komatsu T."/>
            <person name="Mizushima-Sugano J."/>
            <person name="Satoh T."/>
            <person name="Shirai Y."/>
            <person name="Takahashi Y."/>
            <person name="Nakagawa K."/>
            <person name="Okumura K."/>
            <person name="Nagase T."/>
            <person name="Nomura N."/>
            <person name="Kikuchi H."/>
            <person name="Masuho Y."/>
            <person name="Yamashita R."/>
            <person name="Nakai K."/>
            <person name="Yada T."/>
            <person name="Nakamura Y."/>
            <person name="Ohara O."/>
            <person name="Isogai T."/>
            <person name="Sugano S."/>
        </authorList>
    </citation>
    <scope>NUCLEOTIDE SEQUENCE [LARGE SCALE MRNA]</scope>
    <source>
        <tissue>Trachea</tissue>
    </source>
</reference>
<reference key="6">
    <citation type="submission" date="2003-05" db="EMBL/GenBank/DDBJ databases">
        <authorList>
            <consortium name="SeattleSNPs variation discovery resource"/>
        </authorList>
    </citation>
    <scope>NUCLEOTIDE SEQUENCE [GENOMIC DNA]</scope>
</reference>
<reference key="7">
    <citation type="submission" date="2005-09" db="EMBL/GenBank/DDBJ databases">
        <authorList>
            <person name="Mural R.J."/>
            <person name="Istrail S."/>
            <person name="Sutton G.G."/>
            <person name="Florea L."/>
            <person name="Halpern A.L."/>
            <person name="Mobarry C.M."/>
            <person name="Lippert R."/>
            <person name="Walenz B."/>
            <person name="Shatkay H."/>
            <person name="Dew I."/>
            <person name="Miller J.R."/>
            <person name="Flanigan M.J."/>
            <person name="Edwards N.J."/>
            <person name="Bolanos R."/>
            <person name="Fasulo D."/>
            <person name="Halldorsson B.V."/>
            <person name="Hannenhalli S."/>
            <person name="Turner R."/>
            <person name="Yooseph S."/>
            <person name="Lu F."/>
            <person name="Nusskern D.R."/>
            <person name="Shue B.C."/>
            <person name="Zheng X.H."/>
            <person name="Zhong F."/>
            <person name="Delcher A.L."/>
            <person name="Huson D.H."/>
            <person name="Kravitz S.A."/>
            <person name="Mouchard L."/>
            <person name="Reinert K."/>
            <person name="Remington K.A."/>
            <person name="Clark A.G."/>
            <person name="Waterman M.S."/>
            <person name="Eichler E.E."/>
            <person name="Adams M.D."/>
            <person name="Hunkapiller M.W."/>
            <person name="Myers E.W."/>
            <person name="Venter J.C."/>
        </authorList>
    </citation>
    <scope>NUCLEOTIDE SEQUENCE [LARGE SCALE GENOMIC DNA]</scope>
</reference>
<reference key="8">
    <citation type="journal article" date="2004" name="Genome Res.">
        <title>The status, quality, and expansion of the NIH full-length cDNA project: the Mammalian Gene Collection (MGC).</title>
        <authorList>
            <consortium name="The MGC Project Team"/>
        </authorList>
    </citation>
    <scope>NUCLEOTIDE SEQUENCE [LARGE SCALE MRNA]</scope>
    <source>
        <tissue>Uterus</tissue>
    </source>
</reference>
<reference key="9">
    <citation type="journal article" date="1986" name="Proc. Natl. Acad. Sci. U.S.A.">
        <title>Isolation and sequence of the cDNA for human protein S, a regulator of blood coagulation.</title>
        <authorList>
            <person name="Lundwall A."/>
            <person name="Dackowski W."/>
            <person name="Cohen E."/>
            <person name="Shaffer M."/>
            <person name="Mahr A."/>
            <person name="Dahlback B."/>
            <person name="Stenflo J."/>
            <person name="Wydro R."/>
        </authorList>
    </citation>
    <scope>NUCLEOTIDE SEQUENCE [MRNA] OF 27-676</scope>
</reference>
<reference key="10">
    <citation type="journal article" date="1995" name="Thromb. Haemost.">
        <title>Identification of eight point mutations in protein S deficiency type I -- analysis of 15 pedigrees.</title>
        <authorList>
            <person name="Gomez E."/>
            <person name="Poort S.R."/>
            <person name="Bertina R.M."/>
            <person name="Reitsma P.H."/>
        </authorList>
    </citation>
    <scope>NUCLEOTIDE SEQUENCE [GENOMIC DNA] OF 500-519</scope>
    <scope>VARIANTS THPH5 VAL-381 AND GLY-508</scope>
</reference>
<reference key="11">
    <citation type="journal article" date="2005" name="J. Proteome Res.">
        <title>Human plasma N-glycoproteome analysis by immunoaffinity subtraction, hydrazide chemistry, and mass spectrometry.</title>
        <authorList>
            <person name="Liu T."/>
            <person name="Qian W.-J."/>
            <person name="Gritsenko M.A."/>
            <person name="Camp D.G. II"/>
            <person name="Monroe M.E."/>
            <person name="Moore R.J."/>
            <person name="Smith R.D."/>
        </authorList>
    </citation>
    <scope>GLYCOSYLATION [LARGE SCALE ANALYSIS] AT ASN-530</scope>
    <source>
        <tissue>Plasma</tissue>
    </source>
</reference>
<reference key="12">
    <citation type="journal article" date="2014" name="J. Proteomics">
        <title>An enzyme assisted RP-RPLC approach for in-depth analysis of human liver phosphoproteome.</title>
        <authorList>
            <person name="Bian Y."/>
            <person name="Song C."/>
            <person name="Cheng K."/>
            <person name="Dong M."/>
            <person name="Wang F."/>
            <person name="Huang J."/>
            <person name="Sun D."/>
            <person name="Wang L."/>
            <person name="Ye M."/>
            <person name="Zou H."/>
        </authorList>
    </citation>
    <scope>IDENTIFICATION BY MASS SPECTROMETRY [LARGE SCALE ANALYSIS]</scope>
    <source>
        <tissue>Liver</tissue>
    </source>
</reference>
<reference key="13">
    <citation type="journal article" date="2005" name="Biochemistry">
        <title>Solution structure of the Ca2+-binding EGF3-4 pair from vitamin K-dependent protein S: identification of an unusual fold in EGF3.</title>
        <authorList>
            <person name="Drakenberg T."/>
            <person name="Ghasriani H."/>
            <person name="Thulin E."/>
            <person name="Thamlitz A.M."/>
            <person name="Muranyi A."/>
            <person name="Annila A."/>
            <person name="Stenflo J."/>
        </authorList>
    </citation>
    <scope>STRUCTURE BY NMR OF 200-286</scope>
    <scope>DISULFIDE BONDS</scope>
</reference>
<reference key="14">
    <citation type="journal article" date="1990" name="Blood">
        <title>Heerlen polymorphism of protein S, an immunologic polymorphism due to dimorphism of residue 460.</title>
        <authorList>
            <person name="Bertina R.M."/>
            <person name="Ploos van Amstel H.K."/>
            <person name="van Wijngaarden A."/>
            <person name="Coenen J."/>
            <person name="Leemhuis M.P."/>
            <person name="Deutz-Terlouw P.P."/>
            <person name="van der Linden I.K."/>
            <person name="Reitsma P.H."/>
        </authorList>
    </citation>
    <scope>VARIANT PRO-501</scope>
</reference>
<reference key="15">
    <citation type="unpublished observations" date="1993-09">
        <authorList>
            <person name="Cooper D.N."/>
        </authorList>
    </citation>
    <scope>VARIANT THPH5 SER-258</scope>
</reference>
<reference key="16">
    <citation type="journal article" date="1994" name="Blood">
        <title>Protein S Tokushima: abnormal molecule with a substitution of Glu for Lys-155 in the second epidermal growth factor-like domain of protein S.</title>
        <authorList>
            <person name="Hayashi T."/>
            <person name="Nishioka J."/>
            <person name="Shigekiyo T."/>
            <person name="Saito S."/>
            <person name="Suzuki K."/>
        </authorList>
    </citation>
    <scope>VARIANT THPH5 TOKUSHIMA GLU-196</scope>
</reference>
<reference key="17">
    <citation type="journal article" date="1995" name="Blood">
        <title>Identification of 15 different candidate causal point mutations and three polymorphisms in 19 patients with protein S deficiency using a scanning method for the analysis of the protein S active gene.</title>
        <authorList>
            <person name="Gandrille S."/>
            <person name="Borgel D."/>
            <person name="Eschwege-Gufflet V."/>
            <person name="Aillaud M."/>
            <person name="Dreyfus M."/>
            <person name="Matheron C."/>
            <person name="Gaussem P."/>
            <person name="Abgrall J.F."/>
            <person name="Jude B."/>
            <person name="Sie P."/>
            <person name="Toulon P."/>
            <person name="Aiach M."/>
        </authorList>
    </citation>
    <scope>VARIANTS THPH5 LEU-40; HIS-41; ALA-67; CYS-72; MET-78; HIS-90; ASN-144; GLY-245; LYS-249; TRP-265; ARG-265 AND ASN-376</scope>
    <scope>VARIANTS LEU-76 AND VAL-385</scope>
</reference>
<reference key="18">
    <citation type="journal article" date="1995" name="Blood">
        <title>Detection and characterization of seven novel protein S (PROS) gene lesions: evaluation of reverse transcript-polymerase chain reaction as a mutation screening strategy.</title>
        <authorList>
            <person name="Formstone C.J."/>
            <person name="Wacey A.I."/>
            <person name="Berg L.-P."/>
            <person name="Rahman S."/>
            <person name="Bevan D."/>
            <person name="Rowley M."/>
            <person name="Voke J."/>
            <person name="Bernardi F."/>
            <person name="Legnani C."/>
            <person name="Simioni P."/>
            <person name="Girolami A."/>
            <person name="Tuddenham E.G.D."/>
            <person name="Kakkar V.V."/>
            <person name="Cooper D.N."/>
        </authorList>
    </citation>
    <scope>VARIANTS THPH5 SER-258 AND THR-611</scope>
</reference>
<reference key="19">
    <citation type="journal article" date="1995" name="Blood">
        <title>Protein S deficiency type I: identification of point mutations in 9 of 10 families.</title>
        <authorList>
            <person name="Mustafa S."/>
            <person name="Pabinger I."/>
            <person name="Mannhalter C."/>
        </authorList>
    </citation>
    <scope>VARIANTS THPH5 PRO-351; SER-552; GLN-584 AND PRO-616</scope>
</reference>
<reference key="20">
    <citation type="journal article" date="1996" name="Arterioscler. Thromb. Vasc. Biol.">
        <title>Identification of two novel point mutations in the human protein S gene associated with familial protein S deficiency and thrombosis.</title>
        <authorList>
            <person name="Li M."/>
            <person name="Long G.L."/>
        </authorList>
    </citation>
    <scope>VARIANT THPH5 SER-644</scope>
</reference>
<reference key="21">
    <citation type="journal article" date="1996" name="Blood">
        <title>Molecular basis of a hereditary type I protein S deficiency caused by a substitution of Cys for Arg474.</title>
        <authorList>
            <person name="Yamazaki T."/>
            <person name="Katsumi A."/>
            <person name="Kagami K."/>
            <person name="Okamoto Y."/>
            <person name="Sugiura I."/>
            <person name="Hamaguchi M."/>
            <person name="Kojima T."/>
            <person name="Takamatsu J."/>
            <person name="Saito H."/>
        </authorList>
    </citation>
    <scope>VARIANT THPH5 CYS-515</scope>
    <scope>CHARACTERIZATION OF VARIANT PROS1 DEFICIENCY CYS-515</scope>
    <scope>MUTAGENESIS OF ARG-515</scope>
</reference>
<reference key="22">
    <citation type="journal article" date="1996" name="Blood">
        <title>Molecular basis of protein S deficiency in three families also showing independent inheritance of factor V Leiden.</title>
        <authorList>
            <person name="Beauchamp N.J."/>
            <person name="Daly M.E."/>
            <person name="Cooper P.C."/>
            <person name="Makris M."/>
            <person name="Preston F.E."/>
            <person name="Peake I.R."/>
        </authorList>
    </citation>
    <scope>VARIANTS THPH5 TYR-186; THR-611 AND LEU-665</scope>
</reference>
<reference key="23">
    <citation type="journal article" date="1996" name="Blood">
        <title>Identification of 19 protein S gene mutations in patients with phenotypic protein S deficiency and thrombosis.</title>
        <authorList>
            <consortium name="Protein S study group"/>
            <person name="Simmonds R.E."/>
            <person name="Ireland H."/>
            <person name="Kunz G."/>
            <person name="Lane D.A."/>
        </authorList>
    </citation>
    <scope>VARIANTS THPH5 GLU-50; ALA-67; GLU-95; TYR-186; SER-241; PRO-324; ASP-381; SER-449 AND ARG-666</scope>
    <scope>VARIANT PRO-501</scope>
</reference>
<reference key="24">
    <citation type="journal article" date="1996" name="J. Lab. Clin. Med.">
        <title>Molecular basis for protein S hereditary deficiency: genetic defects observed in 118 patients with type I and type IIa deficiencies.</title>
        <authorList>
            <consortium name="The French network on molecular abnormalities responsible for protein C and protein S deficiencies"/>
            <person name="Borgel D."/>
            <person name="Duchemin J."/>
            <person name="Alhenc-Gelas M."/>
            <person name="Matheron C."/>
            <person name="Aiach M."/>
            <person name="Gandrille S."/>
        </authorList>
    </citation>
    <scope>VARIANTS THPH5 SER-111; GLY-157; GLY-161; GLU-364; PRO-446; ARG-475; ALA-501; MET-508; CYS-515; PRO-525; ALA-532; TYR-568; ARG-575 AND ARG-666</scope>
    <scope>VARIANT PRO-501</scope>
</reference>
<reference key="25">
    <citation type="journal article" date="1996" name="Thromb. Haemost.">
        <title>Five novel mutations of the protein S active gene (PROS 1) in 8 Norman families.</title>
        <authorList>
            <person name="Duchemin J."/>
            <person name="Borg J.-Y."/>
            <person name="Borgel D."/>
            <person name="Vasse M."/>
            <person name="Leveque H."/>
            <person name="Aiach M."/>
            <person name="Gandrille S."/>
        </authorList>
    </citation>
    <scope>VARIANTS THPH5 PRO-300 AND ARG-666</scope>
</reference>
<reference key="26">
    <citation type="journal article" date="1997" name="Thromb. Haemost.">
        <title>Identification of three novel mutations in hereditary protein S deficiency.</title>
        <authorList>
            <person name="Bustorff T.C."/>
            <person name="Freire I."/>
            <person name="Gago T."/>
            <person name="Crespo F."/>
            <person name="David D."/>
        </authorList>
    </citation>
    <scope>VARIANT THPH5 PHE-639</scope>
</reference>
<reference key="27">
    <citation type="journal article" date="1997" name="Thromb. Haemost.">
        <title>Protein S deficiency: a database of mutations.</title>
        <authorList>
            <consortium name="Plasma coagulation inhibitors subcommittee of the scientific and standardization committee of the international society on thrombosis and haemostasis"/>
            <person name="Gandrille S."/>
            <person name="Borgel D."/>
            <person name="Ireland H."/>
            <person name="Lane D.A."/>
            <person name="Simmonds R."/>
            <person name="Reitsma P.H."/>
            <person name="Mannhalter C."/>
            <person name="Pabinger I."/>
            <person name="Saito H."/>
            <person name="Suzuki K."/>
            <person name="Formstone C."/>
            <person name="Cooper D.N."/>
            <person name="Espinosa Y."/>
            <person name="Sala N."/>
            <person name="Bernardi F."/>
            <person name="Aiach M."/>
        </authorList>
    </citation>
    <scope>VARIANTS THPH5 ASP-68; ARG-95 AND SER-336</scope>
</reference>
<reference key="28">
    <citation type="journal article" date="1999" name="Hum. Mutat.">
        <title>Protein S gene analysis reveals the presence of a cosegregating mutation in most pedigrees with type I but not type III PS deficiency.</title>
        <authorList>
            <person name="Espinosa-Parrilla Y."/>
            <person name="Morell M."/>
            <person name="Souto J.C."/>
            <person name="Tirado I."/>
            <person name="Fontcuberta J."/>
            <person name="Estivill X."/>
            <person name="Sala N."/>
        </authorList>
    </citation>
    <scope>VARIANTS THPH5 CYS-482; CYS-485 AND GLY-561</scope>
    <scope>VARIANTS PRO-501 AND MET-559</scope>
</reference>
<reference key="29">
    <citation type="journal article" date="1999" name="Thromb. Haemost.">
        <title>Poor relationship between phenotypes of protein S deficiency and mutations in the protein S alpha gene.</title>
        <authorList>
            <person name="Hermida J."/>
            <person name="Faioni E.M."/>
            <person name="Mannucci P.M."/>
        </authorList>
    </citation>
    <scope>VARIANTS THPH5 ALA-67; GLY-129; PHE-175; PRO-515; LEU-562 AND ASP-638</scope>
    <scope>VARIANTS LEU-76 AND ASP-638</scope>
</reference>
<reference key="30">
    <citation type="journal article" date="2000" name="Blood">
        <title>Genetic analysis, phenotypic diagnosis, and risk of venous thrombosis in families with inherited deficiencies of protein S.</title>
        <authorList>
            <person name="Makris M."/>
            <person name="Leach M."/>
            <person name="Beauchamp N.J."/>
            <person name="Daly M.E."/>
            <person name="Cooper P.C."/>
            <person name="Hampton K.K."/>
            <person name="Bayliss P."/>
            <person name="Peake I.R."/>
            <person name="Miller G.J."/>
            <person name="Preston F.E."/>
        </authorList>
    </citation>
    <scope>VARIANTS THPH5 TYR-166; GLY-247; THR-611; ARG-622 AND ARG-666</scope>
</reference>
<reference key="31">
    <citation type="journal article" date="2000" name="Hum. Mutat.">
        <title>Optimization of a simple and rapid single-strand conformation analysis for detection of mutations in the PROS1 gene: identification of seven novel mutations and three novel, apparently neutral, variants.</title>
        <authorList>
            <person name="Espinosa-Parrilla Y."/>
            <person name="Morell M."/>
            <person name="Borrell M."/>
            <person name="Souto J.C."/>
            <person name="Fontcuberta J."/>
            <person name="Estivill X."/>
            <person name="Sala N."/>
        </authorList>
    </citation>
    <scope>VARIANTS THPH5 HIS-15; THR-640 AND LEU-667</scope>
    <scope>VARIANTS SER-98; LYS-233 AND MET-559</scope>
</reference>
<reference key="32">
    <citation type="journal article" date="2001" name="Semin. Thromb. Hemost.">
        <title>DNA sequence analysis of protein S deficiency -- identification of four point mutations in twelve Japanese subjects.</title>
        <authorList>
            <person name="Iwaki T."/>
            <person name="Mastushita T."/>
            <person name="Kobayashi T."/>
            <person name="Yamamoto Y."/>
            <person name="Nomura Y."/>
            <person name="Kagami K."/>
            <person name="Nakayama T."/>
            <person name="Sugiura I."/>
            <person name="Kojima T."/>
            <person name="Takamatsu J."/>
            <person name="Kanayama N."/>
            <person name="Saito H."/>
        </authorList>
    </citation>
    <scope>VARIANTS THPH5 ASN-243 AND PRO-339</scope>
</reference>
<reference key="33">
    <citation type="journal article" date="2001" name="Thromb. Haemost.">
        <title>Characterization and structural impact of five novel PROS1 mutations in eleven protein S-deficient families.</title>
        <authorList>
            <person name="Andersen B.D."/>
            <person name="Bisgaard M.L."/>
            <person name="Lind B."/>
            <person name="Philips M."/>
            <person name="Villoutreix B.O."/>
            <person name="Thorsen S."/>
        </authorList>
    </citation>
    <scope>VARIANTS THPH5 CYS-149; ARG-383; LYS-390 AND SER-526</scope>
</reference>
<reference key="34">
    <citation type="journal article" date="2002" name="Blood">
        <title>Protein S Gla-domain mutations causing impaired Ca(2+)-induced phospholipid binding and severe functional protein S deficiency.</title>
        <authorList>
            <person name="Rezende S.M."/>
            <person name="Lane D.A."/>
            <person name="Mille-Baker B."/>
            <person name="Samama M.M."/>
            <person name="Conard J."/>
            <person name="Simmonds R.E."/>
        </authorList>
    </citation>
    <scope>VARIANTS THPH5 ASP-52 AND MET-78</scope>
    <scope>CHARACTERIZATION OF VARIANTS THPH5 ASP-52 AND MET-78</scope>
</reference>
<reference key="35">
    <citation type="journal article" date="2002" name="Thromb. Haemost.">
        <title>Genetic and phenotypic variability between families with hereditary protein S deficiency.</title>
        <authorList>
            <person name="Rezende S.M."/>
            <person name="Lane D.A."/>
            <person name="Zoeller B."/>
            <person name="Mille-Baker B."/>
            <person name="Laffan M."/>
            <person name="Dalhbaeck B."/>
            <person name="Simmonds R.E."/>
        </authorList>
    </citation>
    <scope>VARIANTS THPH5 GLU-18; CYS-90; SER-258; VAL-336 AND PRO-664</scope>
    <scope>CHARACTERIZATION OF VARIANTS THPH5 GLU-18; CYS-90; SER-258 VAL-336 AND PRO-664</scope>
</reference>
<reference key="36">
    <citation type="journal article" date="2002" name="Thromb. Res.">
        <title>Four missense mutations identified in the protein S gene of thrombosis patients with protein S deficiency: effects on secretion and anticoagulant activity of protein S.</title>
        <authorList>
            <person name="Tsuda H."/>
            <person name="Urata M."/>
            <person name="Tsuda T."/>
            <person name="Wakiyama M."/>
            <person name="Iida H."/>
            <person name="Nakahara M."/>
            <person name="Kinoshita S."/>
            <person name="Hamasaki N."/>
        </authorList>
    </citation>
    <scope>VARIANTS THPH5 ARG-95; GLU-196; ILE-630 AND CYS-636</scope>
    <scope>CHARACTERIZATION OF VARIANTS THPH5 ARG-95; GLU-196; ILE-630 AND CYS-636</scope>
</reference>
<reference key="37">
    <citation type="journal article" date="2003" name="Blood Coagul. Fibrinolysis">
        <title>Familial thrombophilia is an oligogenetic disease: involvement of the prothrombin G20210A, PROC and PROS gene mutations.</title>
        <authorList>
            <person name="Boinot C."/>
            <person name="Borgel D."/>
            <person name="Kitzis A."/>
            <person name="Guicheteau M."/>
            <person name="Aiach M."/>
            <person name="Alhenc-Gelas M."/>
        </authorList>
    </citation>
    <scope>VARIANTS THPH5 CYS-101 AND ASN-144</scope>
    <scope>VARIANT SER-168</scope>
</reference>
<reference key="38">
    <citation type="journal article" date="2004" name="Br. J. Haematol.">
        <title>Identification of protein Salpha gene mutations including four novel mutations in eight unrelated patients with protein S deficiency.</title>
        <authorList>
            <person name="Okada H."/>
            <person name="Takagi A."/>
            <person name="Murate T."/>
            <person name="Adachi T."/>
            <person name="Yamamoto K."/>
            <person name="Matsushita T."/>
            <person name="Takamatsu J."/>
            <person name="Sugita K."/>
            <person name="Sugimoto M."/>
            <person name="Yoshioka A."/>
            <person name="Yamazaki T."/>
            <person name="Saito H."/>
            <person name="Kojima T."/>
        </authorList>
    </citation>
    <scope>VARIANTS THPH5 LEU-87; TYR-121; GLU-196; HIS-355 AND LEU-667</scope>
</reference>
<reference key="39">
    <citation type="journal article" date="2005" name="Hum. Mutat.">
        <title>Molecular diversity and thrombotic risk in protein S deficiency: the PROSIT study.</title>
        <authorList>
            <consortium name="Protein S Italian team (PROSIT)"/>
            <person name="Biguzzi E."/>
            <person name="Razzari C."/>
            <person name="Lane D.A."/>
            <person name="Castaman G."/>
            <person name="Cappellari A."/>
            <person name="Bucciarelli P."/>
            <person name="Fontana G."/>
            <person name="Margaglione M."/>
            <person name="D'Andrea G."/>
            <person name="Simmonds R.E."/>
            <person name="Rezende S.M."/>
            <person name="Preston R."/>
            <person name="Prisco D."/>
            <person name="Faioni E.M."/>
        </authorList>
    </citation>
    <scope>VARIANTS THPH5 ALA-67; TYR-88; GLY-129; ASN-144; PHE-175; GLY-204; CYS-266; SER-267; ASP-336; ARG-357; PRO-446; PRO-515; ASP-521; LYS-611; ASP-638 AND TYR-639</scope>
    <scope>VARIANTS LEU-76; PRO-501; MET-559; LEU-562 AND HIS-583</scope>
    <scope>CHARACTERIZATION OF VARIANTS PROS1 DEFICIENCY ALA-67; TYR-88; GLY-129; PHE-175; GLY-204; CYS-266; SER-267; ASP-336; ARG-357; PRO-446; PRO-515; ASP-521; LYS-611; ASP-638 AND TYR-639</scope>
    <scope>CHARACTERIZATION OF VARIANTS LEU-76; LEU-562 AND HIS-583</scope>
</reference>
<reference key="40">
    <citation type="journal article" date="2006" name="Science">
        <title>The consensus coding sequences of human breast and colorectal cancers.</title>
        <authorList>
            <person name="Sjoeblom T."/>
            <person name="Jones S."/>
            <person name="Wood L.D."/>
            <person name="Parsons D.W."/>
            <person name="Lin J."/>
            <person name="Barber T.D."/>
            <person name="Mandelker D."/>
            <person name="Leary R.J."/>
            <person name="Ptak J."/>
            <person name="Silliman N."/>
            <person name="Szabo S."/>
            <person name="Buckhaults P."/>
            <person name="Farrell C."/>
            <person name="Meeh P."/>
            <person name="Markowitz S.D."/>
            <person name="Willis J."/>
            <person name="Dawson D."/>
            <person name="Willson J.K.V."/>
            <person name="Gazdar A.F."/>
            <person name="Hartigan J."/>
            <person name="Wu L."/>
            <person name="Liu C."/>
            <person name="Parmigiani G."/>
            <person name="Park B.H."/>
            <person name="Bachman K.E."/>
            <person name="Papadopoulos N."/>
            <person name="Vogelstein B."/>
            <person name="Kinzler K.W."/>
            <person name="Velculescu V.E."/>
        </authorList>
    </citation>
    <scope>VARIANT [LARGE SCALE ANALYSIS] GLY-545</scope>
</reference>
<reference key="41">
    <citation type="journal article" date="2008" name="Haematologica">
        <title>Functional characterization of twelve natural PROS1 mutations associated with anticoagulant protein S deficiency.</title>
        <authorList>
            <person name="Hurtado B."/>
            <person name="Munoz X."/>
            <person name="Mulero M.C."/>
            <person name="Navarro G."/>
            <person name="Domenech P."/>
            <person name="Garcia de Frutos P."/>
            <person name="Perez-Riba M."/>
            <person name="Sala N."/>
        </authorList>
    </citation>
    <scope>CHARACTERIZATION OF VARIANTS THPH5 HIS-15 AND THR-640</scope>
    <scope>CHARACTERIZATION OF VARIANT LYS-233</scope>
</reference>
<reference key="42">
    <citation type="journal article" date="2010" name="Neonatology">
        <title>Intracerebral mass bleeding in a term neonate: manifestation of hereditary protein S deficiency with a new mutation in the PROS1 gene.</title>
        <authorList>
            <person name="Fischer D."/>
            <person name="Porto L."/>
            <person name="Stoll H."/>
            <person name="Geisen C."/>
            <person name="Schloesser R.L."/>
        </authorList>
    </citation>
    <scope>VARIANT THPH6 CYS-234</scope>
</reference>
<reference key="43">
    <citation type="journal article" date="2016" name="Nature">
        <title>Analysis of protein-coding genetic variation in 60,706 humans.</title>
        <authorList>
            <consortium name="Exome Aggregation Consortium"/>
            <person name="Lek M."/>
            <person name="Karczewski K.J."/>
            <person name="Minikel E.V."/>
            <person name="Samocha K.E."/>
            <person name="Banks E."/>
            <person name="Fennell T."/>
            <person name="O'Donnell-Luria A.H."/>
            <person name="Ware J.S."/>
            <person name="Hill A.J."/>
            <person name="Cummings B.B."/>
            <person name="Tukiainen T."/>
            <person name="Birnbaum D.P."/>
            <person name="Kosmicki J.A."/>
            <person name="Duncan L.E."/>
            <person name="Estrada K."/>
            <person name="Zhao F."/>
            <person name="Zou J."/>
            <person name="Pierce-Hoffman E."/>
            <person name="Berghout J."/>
            <person name="Cooper D.N."/>
            <person name="Deflaux N."/>
            <person name="DePristo M."/>
            <person name="Do R."/>
            <person name="Flannick J."/>
            <person name="Fromer M."/>
            <person name="Gauthier L."/>
            <person name="Goldstein J."/>
            <person name="Gupta N."/>
            <person name="Howrigan D."/>
            <person name="Kiezun A."/>
            <person name="Kurki M.I."/>
            <person name="Moonshine A.L."/>
            <person name="Natarajan P."/>
            <person name="Orozco L."/>
            <person name="Peloso G.M."/>
            <person name="Poplin R."/>
            <person name="Rivas M.A."/>
            <person name="Ruano-Rubio V."/>
            <person name="Rose S.A."/>
            <person name="Ruderfer D.M."/>
            <person name="Shakir K."/>
            <person name="Stenson P.D."/>
            <person name="Stevens C."/>
            <person name="Thomas B.P."/>
            <person name="Tiao G."/>
            <person name="Tusie-Luna M.T."/>
            <person name="Weisburd B."/>
            <person name="Won H.H."/>
            <person name="Yu D."/>
            <person name="Altshuler D.M."/>
            <person name="Ardissino D."/>
            <person name="Boehnke M."/>
            <person name="Danesh J."/>
            <person name="Donnelly S."/>
            <person name="Elosua R."/>
            <person name="Florez J.C."/>
            <person name="Gabriel S.B."/>
            <person name="Getz G."/>
            <person name="Glatt S.J."/>
            <person name="Hultman C.M."/>
            <person name="Kathiresan S."/>
            <person name="Laakso M."/>
            <person name="McCarroll S."/>
            <person name="McCarthy M.I."/>
            <person name="McGovern D."/>
            <person name="McPherson R."/>
            <person name="Neale B.M."/>
            <person name="Palotie A."/>
            <person name="Purcell S.M."/>
            <person name="Saleheen D."/>
            <person name="Scharf J.M."/>
            <person name="Sklar P."/>
            <person name="Sullivan P.F."/>
            <person name="Tuomilehto J."/>
            <person name="Tsuang M.T."/>
            <person name="Watkins H.C."/>
            <person name="Wilson J.G."/>
            <person name="Daly M.J."/>
            <person name="MacArthur D.G."/>
        </authorList>
    </citation>
    <scope>VARIANT LYS-233</scope>
</reference>